<reference key="1">
    <citation type="journal article" date="1990" name="Nucleic Acids Res.">
        <title>Nucleotide and amino-acid sequence of human testis-derived TCP1.</title>
        <authorList>
            <person name="Kirchhoff C."/>
            <person name="Willison K.R."/>
        </authorList>
    </citation>
    <scope>NUCLEOTIDE SEQUENCE [MRNA]</scope>
    <source>
        <tissue>Testis</tissue>
    </source>
</reference>
<reference key="2">
    <citation type="submission" date="2004-10" db="EMBL/GenBank/DDBJ databases">
        <title>Cloning of human full-length CDSs in BD Creator(TM) system donor vector.</title>
        <authorList>
            <person name="Kalnine N."/>
            <person name="Chen X."/>
            <person name="Rolfs A."/>
            <person name="Halleck A."/>
            <person name="Hines L."/>
            <person name="Eisenstein S."/>
            <person name="Koundinya M."/>
            <person name="Raphael J."/>
            <person name="Moreira D."/>
            <person name="Kelley T."/>
            <person name="LaBaer J."/>
            <person name="Lin Y."/>
            <person name="Phelan M."/>
            <person name="Farmer A."/>
        </authorList>
    </citation>
    <scope>NUCLEOTIDE SEQUENCE [LARGE SCALE MRNA]</scope>
</reference>
<reference key="3">
    <citation type="journal article" date="2003" name="Nature">
        <title>The DNA sequence and analysis of human chromosome 6.</title>
        <authorList>
            <person name="Mungall A.J."/>
            <person name="Palmer S.A."/>
            <person name="Sims S.K."/>
            <person name="Edwards C.A."/>
            <person name="Ashurst J.L."/>
            <person name="Wilming L."/>
            <person name="Jones M.C."/>
            <person name="Horton R."/>
            <person name="Hunt S.E."/>
            <person name="Scott C.E."/>
            <person name="Gilbert J.G.R."/>
            <person name="Clamp M.E."/>
            <person name="Bethel G."/>
            <person name="Milne S."/>
            <person name="Ainscough R."/>
            <person name="Almeida J.P."/>
            <person name="Ambrose K.D."/>
            <person name="Andrews T.D."/>
            <person name="Ashwell R.I.S."/>
            <person name="Babbage A.K."/>
            <person name="Bagguley C.L."/>
            <person name="Bailey J."/>
            <person name="Banerjee R."/>
            <person name="Barker D.J."/>
            <person name="Barlow K.F."/>
            <person name="Bates K."/>
            <person name="Beare D.M."/>
            <person name="Beasley H."/>
            <person name="Beasley O."/>
            <person name="Bird C.P."/>
            <person name="Blakey S.E."/>
            <person name="Bray-Allen S."/>
            <person name="Brook J."/>
            <person name="Brown A.J."/>
            <person name="Brown J.Y."/>
            <person name="Burford D.C."/>
            <person name="Burrill W."/>
            <person name="Burton J."/>
            <person name="Carder C."/>
            <person name="Carter N.P."/>
            <person name="Chapman J.C."/>
            <person name="Clark S.Y."/>
            <person name="Clark G."/>
            <person name="Clee C.M."/>
            <person name="Clegg S."/>
            <person name="Cobley V."/>
            <person name="Collier R.E."/>
            <person name="Collins J.E."/>
            <person name="Colman L.K."/>
            <person name="Corby N.R."/>
            <person name="Coville G.J."/>
            <person name="Culley K.M."/>
            <person name="Dhami P."/>
            <person name="Davies J."/>
            <person name="Dunn M."/>
            <person name="Earthrowl M.E."/>
            <person name="Ellington A.E."/>
            <person name="Evans K.A."/>
            <person name="Faulkner L."/>
            <person name="Francis M.D."/>
            <person name="Frankish A."/>
            <person name="Frankland J."/>
            <person name="French L."/>
            <person name="Garner P."/>
            <person name="Garnett J."/>
            <person name="Ghori M.J."/>
            <person name="Gilby L.M."/>
            <person name="Gillson C.J."/>
            <person name="Glithero R.J."/>
            <person name="Grafham D.V."/>
            <person name="Grant M."/>
            <person name="Gribble S."/>
            <person name="Griffiths C."/>
            <person name="Griffiths M.N.D."/>
            <person name="Hall R."/>
            <person name="Halls K.S."/>
            <person name="Hammond S."/>
            <person name="Harley J.L."/>
            <person name="Hart E.A."/>
            <person name="Heath P.D."/>
            <person name="Heathcott R."/>
            <person name="Holmes S.J."/>
            <person name="Howden P.J."/>
            <person name="Howe K.L."/>
            <person name="Howell G.R."/>
            <person name="Huckle E."/>
            <person name="Humphray S.J."/>
            <person name="Humphries M.D."/>
            <person name="Hunt A.R."/>
            <person name="Johnson C.M."/>
            <person name="Joy A.A."/>
            <person name="Kay M."/>
            <person name="Keenan S.J."/>
            <person name="Kimberley A.M."/>
            <person name="King A."/>
            <person name="Laird G.K."/>
            <person name="Langford C."/>
            <person name="Lawlor S."/>
            <person name="Leongamornlert D.A."/>
            <person name="Leversha M."/>
            <person name="Lloyd C.R."/>
            <person name="Lloyd D.M."/>
            <person name="Loveland J.E."/>
            <person name="Lovell J."/>
            <person name="Martin S."/>
            <person name="Mashreghi-Mohammadi M."/>
            <person name="Maslen G.L."/>
            <person name="Matthews L."/>
            <person name="McCann O.T."/>
            <person name="McLaren S.J."/>
            <person name="McLay K."/>
            <person name="McMurray A."/>
            <person name="Moore M.J.F."/>
            <person name="Mullikin J.C."/>
            <person name="Niblett D."/>
            <person name="Nickerson T."/>
            <person name="Novik K.L."/>
            <person name="Oliver K."/>
            <person name="Overton-Larty E.K."/>
            <person name="Parker A."/>
            <person name="Patel R."/>
            <person name="Pearce A.V."/>
            <person name="Peck A.I."/>
            <person name="Phillimore B.J.C.T."/>
            <person name="Phillips S."/>
            <person name="Plumb R.W."/>
            <person name="Porter K.M."/>
            <person name="Ramsey Y."/>
            <person name="Ranby S.A."/>
            <person name="Rice C.M."/>
            <person name="Ross M.T."/>
            <person name="Searle S.M."/>
            <person name="Sehra H.K."/>
            <person name="Sheridan E."/>
            <person name="Skuce C.D."/>
            <person name="Smith S."/>
            <person name="Smith M."/>
            <person name="Spraggon L."/>
            <person name="Squares S.L."/>
            <person name="Steward C.A."/>
            <person name="Sycamore N."/>
            <person name="Tamlyn-Hall G."/>
            <person name="Tester J."/>
            <person name="Theaker A.J."/>
            <person name="Thomas D.W."/>
            <person name="Thorpe A."/>
            <person name="Tracey A."/>
            <person name="Tromans A."/>
            <person name="Tubby B."/>
            <person name="Wall M."/>
            <person name="Wallis J.M."/>
            <person name="West A.P."/>
            <person name="White S.S."/>
            <person name="Whitehead S.L."/>
            <person name="Whittaker H."/>
            <person name="Wild A."/>
            <person name="Willey D.J."/>
            <person name="Wilmer T.E."/>
            <person name="Wood J.M."/>
            <person name="Wray P.W."/>
            <person name="Wyatt J.C."/>
            <person name="Young L."/>
            <person name="Younger R.M."/>
            <person name="Bentley D.R."/>
            <person name="Coulson A."/>
            <person name="Durbin R.M."/>
            <person name="Hubbard T."/>
            <person name="Sulston J.E."/>
            <person name="Dunham I."/>
            <person name="Rogers J."/>
            <person name="Beck S."/>
        </authorList>
    </citation>
    <scope>NUCLEOTIDE SEQUENCE [LARGE SCALE GENOMIC DNA]</scope>
</reference>
<reference key="4">
    <citation type="submission" date="2005-09" db="EMBL/GenBank/DDBJ databases">
        <authorList>
            <person name="Mural R.J."/>
            <person name="Istrail S."/>
            <person name="Sutton G.G."/>
            <person name="Florea L."/>
            <person name="Halpern A.L."/>
            <person name="Mobarry C.M."/>
            <person name="Lippert R."/>
            <person name="Walenz B."/>
            <person name="Shatkay H."/>
            <person name="Dew I."/>
            <person name="Miller J.R."/>
            <person name="Flanigan M.J."/>
            <person name="Edwards N.J."/>
            <person name="Bolanos R."/>
            <person name="Fasulo D."/>
            <person name="Halldorsson B.V."/>
            <person name="Hannenhalli S."/>
            <person name="Turner R."/>
            <person name="Yooseph S."/>
            <person name="Lu F."/>
            <person name="Nusskern D.R."/>
            <person name="Shue B.C."/>
            <person name="Zheng X.H."/>
            <person name="Zhong F."/>
            <person name="Delcher A.L."/>
            <person name="Huson D.H."/>
            <person name="Kravitz S.A."/>
            <person name="Mouchard L."/>
            <person name="Reinert K."/>
            <person name="Remington K.A."/>
            <person name="Clark A.G."/>
            <person name="Waterman M.S."/>
            <person name="Eichler E.E."/>
            <person name="Adams M.D."/>
            <person name="Hunkapiller M.W."/>
            <person name="Myers E.W."/>
            <person name="Venter J.C."/>
        </authorList>
    </citation>
    <scope>NUCLEOTIDE SEQUENCE [LARGE SCALE GENOMIC DNA]</scope>
</reference>
<reference key="5">
    <citation type="journal article" date="2004" name="Genome Res.">
        <title>The status, quality, and expansion of the NIH full-length cDNA project: the Mammalian Gene Collection (MGC).</title>
        <authorList>
            <consortium name="The MGC Project Team"/>
        </authorList>
    </citation>
    <scope>NUCLEOTIDE SEQUENCE [LARGE SCALE MRNA]</scope>
    <source>
        <tissue>Colon</tissue>
    </source>
</reference>
<reference key="6">
    <citation type="journal article" date="2003" name="Nat. Biotechnol.">
        <title>Exploring proteomes and analyzing protein processing by mass spectrometric identification of sorted N-terminal peptides.</title>
        <authorList>
            <person name="Gevaert K."/>
            <person name="Goethals M."/>
            <person name="Martens L."/>
            <person name="Van Damme J."/>
            <person name="Staes A."/>
            <person name="Thomas G.R."/>
            <person name="Vandekerckhove J."/>
        </authorList>
    </citation>
    <scope>PROTEIN SEQUENCE OF 1-11</scope>
    <scope>ACETYLATION AT MET-1</scope>
    <source>
        <tissue>Platelet</tissue>
    </source>
</reference>
<reference key="7">
    <citation type="submission" date="2007-03" db="UniProtKB">
        <authorList>
            <person name="Lubec G."/>
            <person name="Vishwanath V."/>
        </authorList>
    </citation>
    <scope>PROTEIN SEQUENCE OF 112-122; 131-145; 248-264; 469-480 AND 516-526</scope>
    <scope>IDENTIFICATION BY MASS SPECTROMETRY</scope>
    <source>
        <tissue>Brain</tissue>
        <tissue>Cajal-Retzius cell</tissue>
    </source>
</reference>
<reference key="8">
    <citation type="journal article" date="1987" name="EMBO J.">
        <title>The human homologue of the mouse T-complex gene, TCP1, is located on chromosome 6 but is not near the HLA region.</title>
        <authorList>
            <person name="Willison K."/>
            <person name="Kelly A."/>
            <person name="Dudley K."/>
            <person name="Goodfellow P."/>
            <person name="Spurr N."/>
            <person name="Groves V."/>
            <person name="Gorman P."/>
            <person name="Sheer D."/>
            <person name="Trowsdale J."/>
        </authorList>
    </citation>
    <scope>NUCLEOTIDE SEQUENCE [GENOMIC DNA] OF 308-365 AND 462-516</scope>
</reference>
<reference key="9">
    <citation type="journal article" date="1992" name="Nature">
        <title>T-complex polypeptide-1 is a subunit of a heteromeric particle in the eukaryotic cytosol.</title>
        <authorList>
            <person name="Lewis V.A."/>
            <person name="Hynes G.M."/>
            <person name="Zheng D."/>
            <person name="Saibil H."/>
            <person name="Willison K.R."/>
        </authorList>
    </citation>
    <scope>SUBCELLULAR LOCATION</scope>
    <scope>SUBUNIT</scope>
</reference>
<reference key="10">
    <citation type="journal article" date="2003" name="J. Biol. Chem.">
        <title>A product of the human gene adjacent to parkin is a component of Lewy bodies and suppresses Pael receptor-induced cell death.</title>
        <authorList>
            <person name="Imai Y."/>
            <person name="Soda M."/>
            <person name="Murakami T."/>
            <person name="Shoji M."/>
            <person name="Abe K."/>
            <person name="Takahashi R."/>
        </authorList>
    </citation>
    <scope>INTERACTION WITH PACRG</scope>
</reference>
<reference key="11">
    <citation type="journal article" date="2003" name="Nature">
        <title>Proteomic characterization of the human centrosome by protein correlation profiling.</title>
        <authorList>
            <person name="Andersen J.S."/>
            <person name="Wilkinson C.J."/>
            <person name="Mayor T."/>
            <person name="Mortensen P."/>
            <person name="Nigg E.A."/>
            <person name="Mann M."/>
        </authorList>
    </citation>
    <scope>IDENTIFICATION BY MASS SPECTROMETRY</scope>
    <scope>SUBCELLULAR LOCATION [LARGE SCALE ANALYSIS]</scope>
    <source>
        <tissue>Lymphoblast</tissue>
    </source>
</reference>
<reference key="12">
    <citation type="journal article" date="2006" name="Cell">
        <title>Global, in vivo, and site-specific phosphorylation dynamics in signaling networks.</title>
        <authorList>
            <person name="Olsen J.V."/>
            <person name="Blagoev B."/>
            <person name="Gnad F."/>
            <person name="Macek B."/>
            <person name="Kumar C."/>
            <person name="Mortensen P."/>
            <person name="Mann M."/>
        </authorList>
    </citation>
    <scope>IDENTIFICATION BY MASS SPECTROMETRY [LARGE SCALE ANALYSIS]</scope>
    <source>
        <tissue>Cervix carcinoma</tissue>
    </source>
</reference>
<reference key="13">
    <citation type="journal article" date="2008" name="J. Proteome Res.">
        <title>Phosphoproteome of resting human platelets.</title>
        <authorList>
            <person name="Zahedi R.P."/>
            <person name="Lewandrowski U."/>
            <person name="Wiesner J."/>
            <person name="Wortelkamp S."/>
            <person name="Moebius J."/>
            <person name="Schuetz C."/>
            <person name="Walter U."/>
            <person name="Gambaryan S."/>
            <person name="Sickmann A."/>
        </authorList>
    </citation>
    <scope>IDENTIFICATION BY MASS SPECTROMETRY [LARGE SCALE ANALYSIS]</scope>
    <source>
        <tissue>Platelet</tissue>
    </source>
</reference>
<reference key="14">
    <citation type="journal article" date="2008" name="Proc. Natl. Acad. Sci. U.S.A.">
        <title>A quantitative atlas of mitotic phosphorylation.</title>
        <authorList>
            <person name="Dephoure N."/>
            <person name="Zhou C."/>
            <person name="Villen J."/>
            <person name="Beausoleil S.A."/>
            <person name="Bakalarski C.E."/>
            <person name="Elledge S.J."/>
            <person name="Gygi S.P."/>
        </authorList>
    </citation>
    <scope>PHOSPHORYLATION [LARGE SCALE ANALYSIS] AT SER-544</scope>
    <scope>IDENTIFICATION BY MASS SPECTROMETRY [LARGE SCALE ANALYSIS]</scope>
    <source>
        <tissue>Cervix carcinoma</tissue>
    </source>
</reference>
<reference key="15">
    <citation type="journal article" date="2009" name="Anal. Chem.">
        <title>Lys-N and trypsin cover complementary parts of the phosphoproteome in a refined SCX-based approach.</title>
        <authorList>
            <person name="Gauci S."/>
            <person name="Helbig A.O."/>
            <person name="Slijper M."/>
            <person name="Krijgsveld J."/>
            <person name="Heck A.J."/>
            <person name="Mohammed S."/>
        </authorList>
    </citation>
    <scope>ACETYLATION [LARGE SCALE ANALYSIS] AT MET-1</scope>
    <scope>IDENTIFICATION BY MASS SPECTROMETRY [LARGE SCALE ANALYSIS]</scope>
</reference>
<reference key="16">
    <citation type="journal article" date="2009" name="Sci. Signal.">
        <title>Quantitative phosphoproteomic analysis of T cell receptor signaling reveals system-wide modulation of protein-protein interactions.</title>
        <authorList>
            <person name="Mayya V."/>
            <person name="Lundgren D.H."/>
            <person name="Hwang S.-I."/>
            <person name="Rezaul K."/>
            <person name="Wu L."/>
            <person name="Eng J.K."/>
            <person name="Rodionov V."/>
            <person name="Han D.K."/>
        </authorList>
    </citation>
    <scope>PHOSPHORYLATION [LARGE SCALE ANALYSIS] AT TYR-181 AND SER-544</scope>
    <scope>IDENTIFICATION BY MASS SPECTROMETRY [LARGE SCALE ANALYSIS]</scope>
    <source>
        <tissue>Leukemic T-cell</tissue>
    </source>
</reference>
<reference key="17">
    <citation type="journal article" date="2009" name="Science">
        <title>Lysine acetylation targets protein complexes and co-regulates major cellular functions.</title>
        <authorList>
            <person name="Choudhary C."/>
            <person name="Kumar C."/>
            <person name="Gnad F."/>
            <person name="Nielsen M.L."/>
            <person name="Rehman M."/>
            <person name="Walther T.C."/>
            <person name="Olsen J.V."/>
            <person name="Mann M."/>
        </authorList>
    </citation>
    <scope>ACETYLATION [LARGE SCALE ANALYSIS] AT LYS-199 AND LYS-400</scope>
    <scope>IDENTIFICATION BY MASS SPECTROMETRY [LARGE SCALE ANALYSIS]</scope>
</reference>
<reference key="18">
    <citation type="journal article" date="2010" name="Proc. Natl. Acad. Sci. U.S.A.">
        <title>BBS6, BBS10, and BBS12 form a complex with CCT/TRiC family chaperonins and mediate BBSome assembly.</title>
        <authorList>
            <person name="Seo S."/>
            <person name="Baye L.M."/>
            <person name="Schulz N.P."/>
            <person name="Beck J.S."/>
            <person name="Zhang Q."/>
            <person name="Slusarski D.C."/>
            <person name="Sheffield V.C."/>
        </authorList>
    </citation>
    <scope>FUNCTION</scope>
    <scope>SUBCELLULAR LOCATION</scope>
    <scope>IDENTIFICATION IN THE CHAPERONIN-CONTAINING T-COMPLEX</scope>
</reference>
<reference key="19">
    <citation type="journal article" date="2010" name="Proc. Natl. Acad. Sci. U.S.A.">
        <title>Decreased glucocerebrosidase activity in Gaucher disease parallels quantitative enzyme loss due to abnormal interaction with TCP1 and c-Cbl.</title>
        <authorList>
            <person name="Lu J."/>
            <person name="Chiang J."/>
            <person name="Iyer R.R."/>
            <person name="Thompson E."/>
            <person name="Kaneski C.R."/>
            <person name="Xu D.S."/>
            <person name="Yang C."/>
            <person name="Chen M."/>
            <person name="Hodes R.J."/>
            <person name="Lonser R.R."/>
            <person name="Brady R.O."/>
            <person name="Zhuang Z."/>
        </authorList>
    </citation>
    <scope>INTERACTION WITH GBA1</scope>
</reference>
<reference key="20">
    <citation type="journal article" date="2010" name="Sci. Signal.">
        <title>Quantitative phosphoproteomics reveals widespread full phosphorylation site occupancy during mitosis.</title>
        <authorList>
            <person name="Olsen J.V."/>
            <person name="Vermeulen M."/>
            <person name="Santamaria A."/>
            <person name="Kumar C."/>
            <person name="Miller M.L."/>
            <person name="Jensen L.J."/>
            <person name="Gnad F."/>
            <person name="Cox J."/>
            <person name="Jensen T.S."/>
            <person name="Nigg E.A."/>
            <person name="Brunak S."/>
            <person name="Mann M."/>
        </authorList>
    </citation>
    <scope>PHOSPHORYLATION [LARGE SCALE ANALYSIS] AT SER-544 AND SER-551</scope>
    <scope>IDENTIFICATION BY MASS SPECTROMETRY [LARGE SCALE ANALYSIS]</scope>
    <source>
        <tissue>Cervix carcinoma</tissue>
    </source>
</reference>
<reference key="21">
    <citation type="journal article" date="2011" name="BMC Syst. Biol.">
        <title>Initial characterization of the human central proteome.</title>
        <authorList>
            <person name="Burkard T.R."/>
            <person name="Planyavsky M."/>
            <person name="Kaupe I."/>
            <person name="Breitwieser F.P."/>
            <person name="Buerckstuemmer T."/>
            <person name="Bennett K.L."/>
            <person name="Superti-Furga G."/>
            <person name="Colinge J."/>
        </authorList>
    </citation>
    <scope>IDENTIFICATION BY MASS SPECTROMETRY [LARGE SCALE ANALYSIS]</scope>
</reference>
<reference key="22">
    <citation type="journal article" date="2011" name="Sci. Signal.">
        <title>System-wide temporal characterization of the proteome and phosphoproteome of human embryonic stem cell differentiation.</title>
        <authorList>
            <person name="Rigbolt K.T."/>
            <person name="Prokhorova T.A."/>
            <person name="Akimov V."/>
            <person name="Henningsen J."/>
            <person name="Johansen P.T."/>
            <person name="Kratchmarova I."/>
            <person name="Kassem M."/>
            <person name="Mann M."/>
            <person name="Olsen J.V."/>
            <person name="Blagoev B."/>
        </authorList>
    </citation>
    <scope>PHOSPHORYLATION [LARGE SCALE ANALYSIS] AT SER-544 AND SER-551</scope>
    <scope>IDENTIFICATION BY MASS SPECTROMETRY [LARGE SCALE ANALYSIS]</scope>
</reference>
<reference key="23">
    <citation type="journal article" date="2012" name="Mol. Cell. Proteomics">
        <title>Comparative large-scale characterisation of plant vs. mammal proteins reveals similar and idiosyncratic N-alpha acetylation features.</title>
        <authorList>
            <person name="Bienvenut W.V."/>
            <person name="Sumpton D."/>
            <person name="Martinez A."/>
            <person name="Lilla S."/>
            <person name="Espagne C."/>
            <person name="Meinnel T."/>
            <person name="Giglione C."/>
        </authorList>
    </citation>
    <scope>ACETYLATION [LARGE SCALE ANALYSIS] AT MET-1</scope>
    <scope>IDENTIFICATION BY MASS SPECTROMETRY [LARGE SCALE ANALYSIS]</scope>
</reference>
<reference key="24">
    <citation type="journal article" date="2012" name="Proc. Natl. Acad. Sci. U.S.A.">
        <title>N-terminal acetylome analyses and functional insights of the N-terminal acetyltransferase NatB.</title>
        <authorList>
            <person name="Van Damme P."/>
            <person name="Lasa M."/>
            <person name="Polevoda B."/>
            <person name="Gazquez C."/>
            <person name="Elosegui-Artola A."/>
            <person name="Kim D.S."/>
            <person name="De Juan-Pardo E."/>
            <person name="Demeyer K."/>
            <person name="Hole K."/>
            <person name="Larrea E."/>
            <person name="Timmerman E."/>
            <person name="Prieto J."/>
            <person name="Arnesen T."/>
            <person name="Sherman F."/>
            <person name="Gevaert K."/>
            <person name="Aldabe R."/>
        </authorList>
    </citation>
    <scope>ACETYLATION [LARGE SCALE ANALYSIS] AT MET-1</scope>
    <scope>IDENTIFICATION BY MASS SPECTROMETRY [LARGE SCALE ANALYSIS]</scope>
</reference>
<reference key="25">
    <citation type="journal article" date="2014" name="Cell">
        <title>Proteostatic control of telomerase function through TRiC-mediated folding of TCAB1.</title>
        <authorList>
            <person name="Freund A."/>
            <person name="Zhong F.L."/>
            <person name="Venteicher A.S."/>
            <person name="Meng Z."/>
            <person name="Veenstra T.D."/>
            <person name="Frydman J."/>
            <person name="Artandi S.E."/>
        </authorList>
    </citation>
    <scope>FUNCTION</scope>
    <scope>IDENTIFICATION IN THE CHAPERONIN-CONTAINING T-COMPLEX</scope>
</reference>
<reference key="26">
    <citation type="journal article" date="2013" name="J. Proteome Res.">
        <title>Toward a comprehensive characterization of a human cancer cell phosphoproteome.</title>
        <authorList>
            <person name="Zhou H."/>
            <person name="Di Palma S."/>
            <person name="Preisinger C."/>
            <person name="Peng M."/>
            <person name="Polat A.N."/>
            <person name="Heck A.J."/>
            <person name="Mohammed S."/>
        </authorList>
    </citation>
    <scope>PHOSPHORYLATION [LARGE SCALE ANALYSIS] AT SER-6; SER-491; SER-544 AND SER-551</scope>
    <scope>IDENTIFICATION BY MASS SPECTROMETRY [LARGE SCALE ANALYSIS]</scope>
    <source>
        <tissue>Cervix carcinoma</tissue>
        <tissue>Erythroleukemia</tissue>
    </source>
</reference>
<reference key="27">
    <citation type="journal article" date="2014" name="J. Proteomics">
        <title>An enzyme assisted RP-RPLC approach for in-depth analysis of human liver phosphoproteome.</title>
        <authorList>
            <person name="Bian Y."/>
            <person name="Song C."/>
            <person name="Cheng K."/>
            <person name="Dong M."/>
            <person name="Wang F."/>
            <person name="Huang J."/>
            <person name="Sun D."/>
            <person name="Wang L."/>
            <person name="Ye M."/>
            <person name="Zou H."/>
        </authorList>
    </citation>
    <scope>PHOSPHORYLATION [LARGE SCALE ANALYSIS] AT SER-544</scope>
    <scope>IDENTIFICATION BY MASS SPECTROMETRY [LARGE SCALE ANALYSIS]</scope>
    <source>
        <tissue>Liver</tissue>
    </source>
</reference>
<reference key="28">
    <citation type="journal article" date="2015" name="Proteomics">
        <title>N-terminome analysis of the human mitochondrial proteome.</title>
        <authorList>
            <person name="Vaca Jacome A.S."/>
            <person name="Rabilloud T."/>
            <person name="Schaeffer-Reiss C."/>
            <person name="Rompais M."/>
            <person name="Ayoub D."/>
            <person name="Lane L."/>
            <person name="Bairoch A."/>
            <person name="Van Dorsselaer A."/>
            <person name="Carapito C."/>
        </authorList>
    </citation>
    <scope>IDENTIFICATION BY MASS SPECTROMETRY [LARGE SCALE ANALYSIS]</scope>
</reference>
<reference key="29">
    <citation type="journal article" date="2020" name="Sci. Rep.">
        <title>Dlec1 is required for spermatogenesis and male fertility in mice.</title>
        <authorList>
            <person name="Okitsu Y."/>
            <person name="Nagano M."/>
            <person name="Yamagata T."/>
            <person name="Ito C."/>
            <person name="Toshimori K."/>
            <person name="Dohra H."/>
            <person name="Fujii W."/>
            <person name="Yogo K."/>
        </authorList>
    </citation>
    <scope>INTERACTION WITH DLEC1</scope>
</reference>
<reference evidence="28 29 30 31 32" key="30">
    <citation type="journal article" date="2022" name="Cell">
        <title>Structural visualization of the tubulin folding pathway directed by human chaperonin TRiC/CCT.</title>
        <authorList>
            <person name="Gestaut D."/>
            <person name="Zhao Y."/>
            <person name="Park J."/>
            <person name="Ma B."/>
            <person name="Leitner A."/>
            <person name="Collier M."/>
            <person name="Pintilie G."/>
            <person name="Roh S.H."/>
            <person name="Chiu W."/>
            <person name="Frydman J."/>
        </authorList>
    </citation>
    <scope>STRUCTURE BY ELECTRON MICROSCOPY (2.90 ANGSTROMS) IN COMPLEX WITH TUBULIN</scope>
    <scope>FUNCTION</scope>
    <scope>SUBUNIT</scope>
    <scope>ADP AND MG(2+) BINDING SITES</scope>
    <scope>CATALYTIC ACTIVITY</scope>
</reference>
<reference evidence="24 25 26 27" key="31">
    <citation type="journal article" date="2022" name="Nat. Struct. Mol. Biol.">
        <title>Snapshots of actin and tubulin folding inside the TRiC chaperonin.</title>
        <authorList>
            <person name="Kelly J.J."/>
            <person name="Tranter D."/>
            <person name="Pardon E."/>
            <person name="Chi G."/>
            <person name="Kramer H."/>
            <person name="Happonen L."/>
            <person name="Knee K.M."/>
            <person name="Janz J.M."/>
            <person name="Steyaert J."/>
            <person name="Bulawa C."/>
            <person name="Paavilainen V.O."/>
            <person name="Huiskonen J.T."/>
            <person name="Yue W.W."/>
        </authorList>
    </citation>
    <scope>STRUCTURE BY ELECTRON MICROSCOPY (2.50 ANGSTROMS) IN COMPLEX WITH TUBULIN AND IN COMPLEX WITH ACTIN</scope>
    <scope>FUNCTION</scope>
    <scope>SUBUNIT</scope>
    <scope>ADP AND MG(2+) BINDING SITES</scope>
    <scope>CATALYTIC ACTIVITY</scope>
</reference>
<reference evidence="33 34 35 36 37 38 39 40" key="32">
    <citation type="journal article" date="2023" name="Commun. Biol.">
        <title>Pathway and mechanism of tubulin folding mediated by TRiC/CCT along its ATPase cycle revealed using cryo-EM.</title>
        <authorList>
            <person name="Liu C."/>
            <person name="Jin M."/>
            <person name="Wang S."/>
            <person name="Han W."/>
            <person name="Zhao Q."/>
            <person name="Wang Y."/>
            <person name="Xu C."/>
            <person name="Diao L."/>
            <person name="Yin Y."/>
            <person name="Peng C."/>
            <person name="Peng C."/>
            <person name="Bao L."/>
            <person name="Wang Y."/>
            <person name="Cong Y."/>
        </authorList>
    </citation>
    <scope>STRUCTURE BY ELECTRON MICROSCOPY (3.10 ANGSTROMS) IN COMPLEX WITH TUBULIN</scope>
    <scope>FUNCTION</scope>
    <scope>SUBUNIT</scope>
    <scope>ATP; ADP AND MG(2+) BINDING SITES</scope>
    <scope>CATALYTIC ACTIVITY</scope>
</reference>
<reference key="33">
    <citation type="journal article" date="2006" name="Science">
        <title>The consensus coding sequences of human breast and colorectal cancers.</title>
        <authorList>
            <person name="Sjoeblom T."/>
            <person name="Jones S."/>
            <person name="Wood L.D."/>
            <person name="Parsons D.W."/>
            <person name="Lin J."/>
            <person name="Barber T.D."/>
            <person name="Mandelker D."/>
            <person name="Leary R.J."/>
            <person name="Ptak J."/>
            <person name="Silliman N."/>
            <person name="Szabo S."/>
            <person name="Buckhaults P."/>
            <person name="Farrell C."/>
            <person name="Meeh P."/>
            <person name="Markowitz S.D."/>
            <person name="Willis J."/>
            <person name="Dawson D."/>
            <person name="Willson J.K.V."/>
            <person name="Gazdar A.F."/>
            <person name="Hartigan J."/>
            <person name="Wu L."/>
            <person name="Liu C."/>
            <person name="Parmigiani G."/>
            <person name="Park B.H."/>
            <person name="Bachman K.E."/>
            <person name="Papadopoulos N."/>
            <person name="Vogelstein B."/>
            <person name="Kinzler K.W."/>
            <person name="Velculescu V.E."/>
        </authorList>
    </citation>
    <scope>VARIANT [LARGE SCALE ANALYSIS] LEU-7</scope>
</reference>
<reference key="34">
    <citation type="journal article" date="2024" name="Science">
        <title>Brain malformations and seizures by impaired chaperonin function of TRiC.</title>
        <authorList>
            <person name="Kraft F."/>
            <person name="Rodriguez-Aliaga P."/>
            <person name="Yuan W."/>
            <person name="Franken L."/>
            <person name="Zajt K."/>
            <person name="Hasan D."/>
            <person name="Lee T.T."/>
            <person name="Flex E."/>
            <person name="Hentschel A."/>
            <person name="Innes A.M."/>
            <person name="Zheng B."/>
            <person name="Julia Suh D.S."/>
            <person name="Knopp C."/>
            <person name="Lausberg E."/>
            <person name="Krause J."/>
            <person name="Zhang X."/>
            <person name="Trapane P."/>
            <person name="Carroll R."/>
            <person name="McClatchey M."/>
            <person name="Fry A.E."/>
            <person name="Wang L."/>
            <person name="Giesselmann S."/>
            <person name="Hoang H."/>
            <person name="Baldridge D."/>
            <person name="Silverman G.A."/>
            <person name="Radio F.C."/>
            <person name="Bertini E."/>
            <person name="Ciolfi A."/>
            <person name="Blood K.A."/>
            <person name="de Sainte Agathe J.M."/>
            <person name="Charles P."/>
            <person name="Bergant G."/>
            <person name="Cuturilo G."/>
            <person name="Peterlin B."/>
            <person name="Diderich K."/>
            <person name="Streff H."/>
            <person name="Robak L."/>
            <person name="Oegema R."/>
            <person name="van Binsbergen E."/>
            <person name="Herriges J."/>
            <person name="Saunders C.J."/>
            <person name="Maier A."/>
            <person name="Wolking S."/>
            <person name="Weber Y."/>
            <person name="Lochmueller H."/>
            <person name="Meyer S."/>
            <person name="Aleman A."/>
            <person name="Polavarapu K."/>
            <person name="Nicolas G."/>
            <person name="Goldenberg A."/>
            <person name="Guyant L."/>
            <person name="Pope K."/>
            <person name="Hehmeyer K.N."/>
            <person name="Monaghan K.G."/>
            <person name="Quade A."/>
            <person name="Smol T."/>
            <person name="Caumes R."/>
            <person name="Duerinckx S."/>
            <person name="Depondt C."/>
            <person name="Van Paesschen W."/>
            <person name="Rieubland C."/>
            <person name="Poloni C."/>
            <person name="Guipponi M."/>
            <person name="Arcioni S."/>
            <person name="Meuwissen M."/>
            <person name="Jansen A.C."/>
            <person name="Rosenblum J."/>
            <person name="Haack T.B."/>
            <person name="Bertrand M."/>
            <person name="Gerstner L."/>
            <person name="Magg J."/>
            <person name="Riess O."/>
            <person name="Schulz J.B."/>
            <person name="Wagner N."/>
            <person name="Wiesmann M."/>
            <person name="Weis J."/>
            <person name="Eggermann T."/>
            <person name="Begemann M."/>
            <person name="Roos A."/>
            <person name="Haeusler M."/>
            <person name="Schedl T."/>
            <person name="Tartaglia M."/>
            <person name="Bremer J."/>
            <person name="Pak S.C."/>
            <person name="Frydman J."/>
            <person name="Elbracht M."/>
            <person name="Kurth I."/>
        </authorList>
    </citation>
    <scope>VARIANTS IDDPMGS LEU-38; 92-SER--ASP-556 DEL; ARG-159 AND 262-GLN--ASP-556 DEL</scope>
    <scope>CHARACTERIZATION OF VARIANTS IDDPMGS 92-SER--ASP-556 DEL; ARG-159 AND 262-GLN--ASP-556 DEL</scope>
    <scope>INVOLVEMENT IN IDDPMGS</scope>
</reference>
<evidence type="ECO:0000250" key="1">
    <source>
        <dbReference type="UniProtKB" id="P11983"/>
    </source>
</evidence>
<evidence type="ECO:0000269" key="2">
    <source>
    </source>
</evidence>
<evidence type="ECO:0000269" key="3">
    <source>
    </source>
</evidence>
<evidence type="ECO:0000269" key="4">
    <source>
    </source>
</evidence>
<evidence type="ECO:0000269" key="5">
    <source>
    </source>
</evidence>
<evidence type="ECO:0000269" key="6">
    <source>
    </source>
</evidence>
<evidence type="ECO:0000269" key="7">
    <source>
    </source>
</evidence>
<evidence type="ECO:0000269" key="8">
    <source>
    </source>
</evidence>
<evidence type="ECO:0000269" key="9">
    <source>
    </source>
</evidence>
<evidence type="ECO:0000269" key="10">
    <source>
    </source>
</evidence>
<evidence type="ECO:0000269" key="11">
    <source>
    </source>
</evidence>
<evidence type="ECO:0000269" key="12">
    <source>
    </source>
</evidence>
<evidence type="ECO:0000269" key="13">
    <source>
    </source>
</evidence>
<evidence type="ECO:0000269" key="14">
    <source>
    </source>
</evidence>
<evidence type="ECO:0000303" key="15">
    <source>
    </source>
</evidence>
<evidence type="ECO:0000303" key="16">
    <source>
    </source>
</evidence>
<evidence type="ECO:0000303" key="17">
    <source>
    </source>
</evidence>
<evidence type="ECO:0000305" key="18"/>
<evidence type="ECO:0000305" key="19">
    <source>
    </source>
</evidence>
<evidence type="ECO:0000305" key="20">
    <source>
    </source>
</evidence>
<evidence type="ECO:0000305" key="21">
    <source>
    </source>
</evidence>
<evidence type="ECO:0000312" key="22">
    <source>
        <dbReference type="HGNC" id="HGNC:11655"/>
    </source>
</evidence>
<evidence type="ECO:0000312" key="23">
    <source>
        <dbReference type="MIM" id="186980"/>
    </source>
</evidence>
<evidence type="ECO:0007744" key="24">
    <source>
        <dbReference type="PDB" id="7NVL"/>
    </source>
</evidence>
<evidence type="ECO:0007744" key="25">
    <source>
        <dbReference type="PDB" id="7NVM"/>
    </source>
</evidence>
<evidence type="ECO:0007744" key="26">
    <source>
        <dbReference type="PDB" id="7NVN"/>
    </source>
</evidence>
<evidence type="ECO:0007744" key="27">
    <source>
        <dbReference type="PDB" id="7NVO"/>
    </source>
</evidence>
<evidence type="ECO:0007744" key="28">
    <source>
        <dbReference type="PDB" id="7TRG"/>
    </source>
</evidence>
<evidence type="ECO:0007744" key="29">
    <source>
        <dbReference type="PDB" id="7TTN"/>
    </source>
</evidence>
<evidence type="ECO:0007744" key="30">
    <source>
        <dbReference type="PDB" id="7TTT"/>
    </source>
</evidence>
<evidence type="ECO:0007744" key="31">
    <source>
        <dbReference type="PDB" id="7TUB"/>
    </source>
</evidence>
<evidence type="ECO:0007744" key="32">
    <source>
        <dbReference type="PDB" id="7WU7"/>
    </source>
</evidence>
<evidence type="ECO:0007744" key="33">
    <source>
        <dbReference type="PDB" id="7WZ3"/>
    </source>
</evidence>
<evidence type="ECO:0007744" key="34">
    <source>
        <dbReference type="PDB" id="7X0A"/>
    </source>
</evidence>
<evidence type="ECO:0007744" key="35">
    <source>
        <dbReference type="PDB" id="7X0S"/>
    </source>
</evidence>
<evidence type="ECO:0007744" key="36">
    <source>
        <dbReference type="PDB" id="7X0V"/>
    </source>
</evidence>
<evidence type="ECO:0007744" key="37">
    <source>
        <dbReference type="PDB" id="7X3J"/>
    </source>
</evidence>
<evidence type="ECO:0007744" key="38">
    <source>
        <dbReference type="PDB" id="7X3U"/>
    </source>
</evidence>
<evidence type="ECO:0007744" key="39">
    <source>
        <dbReference type="PDB" id="7X6Q"/>
    </source>
</evidence>
<evidence type="ECO:0007744" key="40">
    <source>
        <dbReference type="PDB" id="7X7Y"/>
    </source>
</evidence>
<evidence type="ECO:0007744" key="41">
    <source>
    </source>
</evidence>
<evidence type="ECO:0007744" key="42">
    <source>
    </source>
</evidence>
<evidence type="ECO:0007744" key="43">
    <source>
    </source>
</evidence>
<evidence type="ECO:0007744" key="44">
    <source>
    </source>
</evidence>
<evidence type="ECO:0007744" key="45">
    <source>
    </source>
</evidence>
<evidence type="ECO:0007744" key="46">
    <source>
    </source>
</evidence>
<evidence type="ECO:0007744" key="47">
    <source>
    </source>
</evidence>
<evidence type="ECO:0007744" key="48">
    <source>
    </source>
</evidence>
<evidence type="ECO:0007744" key="49">
    <source>
    </source>
</evidence>
<evidence type="ECO:0007744" key="50">
    <source>
    </source>
</evidence>
<evidence type="ECO:0007829" key="51">
    <source>
        <dbReference type="PDB" id="7NVL"/>
    </source>
</evidence>
<evidence type="ECO:0007829" key="52">
    <source>
        <dbReference type="PDB" id="7NVO"/>
    </source>
</evidence>
<evidence type="ECO:0007829" key="53">
    <source>
        <dbReference type="PDB" id="7TTT"/>
    </source>
</evidence>
<evidence type="ECO:0007829" key="54">
    <source>
        <dbReference type="PDB" id="7X0A"/>
    </source>
</evidence>
<evidence type="ECO:0007829" key="55">
    <source>
        <dbReference type="PDB" id="7X0S"/>
    </source>
</evidence>
<evidence type="ECO:0007829" key="56">
    <source>
        <dbReference type="PDB" id="8I9U"/>
    </source>
</evidence>
<evidence type="ECO:0007829" key="57">
    <source>
        <dbReference type="PDB" id="8SGC"/>
    </source>
</evidence>
<evidence type="ECO:0007829" key="58">
    <source>
        <dbReference type="PDB" id="8SH9"/>
    </source>
</evidence>
<evidence type="ECO:0007829" key="59">
    <source>
        <dbReference type="PDB" id="8SHD"/>
    </source>
</evidence>
<protein>
    <recommendedName>
        <fullName>T-complex protein 1 subunit alpha</fullName>
        <shortName>TCP-1-alpha</shortName>
        <ecNumber evidence="19 20 21">3.6.1.-</ecNumber>
    </recommendedName>
    <alternativeName>
        <fullName>CCT-alpha</fullName>
    </alternativeName>
    <alternativeName>
        <fullName evidence="23">Chaperonin containing T-complex polypeptide 1 subunit 1</fullName>
    </alternativeName>
</protein>
<name>TCPA_HUMAN</name>
<feature type="chain" id="PRO_0000128302" description="T-complex protein 1 subunit alpha">
    <location>
        <begin position="1"/>
        <end position="556"/>
    </location>
</feature>
<feature type="binding site" evidence="11 12 24 25 26 29 31">
    <location>
        <position position="37"/>
    </location>
    <ligand>
        <name>ADP</name>
        <dbReference type="ChEBI" id="CHEBI:456216"/>
    </ligand>
</feature>
<feature type="binding site" evidence="13 37">
    <location>
        <position position="37"/>
    </location>
    <ligand>
        <name>ATP</name>
        <dbReference type="ChEBI" id="CHEBI:30616"/>
    </ligand>
</feature>
<feature type="binding site" evidence="11 12 13 24 25 26 27 28 29 30 31 35 36">
    <location>
        <position position="88"/>
    </location>
    <ligand>
        <name>Mg(2+)</name>
        <dbReference type="ChEBI" id="CHEBI:18420"/>
    </ligand>
</feature>
<feature type="binding site" evidence="11 13 24 25 26 27 35 36">
    <location>
        <position position="89"/>
    </location>
    <ligand>
        <name>ADP</name>
        <dbReference type="ChEBI" id="CHEBI:456216"/>
    </ligand>
</feature>
<feature type="binding site" evidence="13 37">
    <location>
        <position position="89"/>
    </location>
    <ligand>
        <name>ATP</name>
        <dbReference type="ChEBI" id="CHEBI:30616"/>
    </ligand>
</feature>
<feature type="binding site" evidence="13 35 36">
    <location>
        <position position="90"/>
    </location>
    <ligand>
        <name>ADP</name>
        <dbReference type="ChEBI" id="CHEBI:456216"/>
    </ligand>
</feature>
<feature type="binding site" evidence="13 37">
    <location>
        <position position="90"/>
    </location>
    <ligand>
        <name>ATP</name>
        <dbReference type="ChEBI" id="CHEBI:30616"/>
    </ligand>
</feature>
<feature type="binding site" evidence="11 12 13 24 25 26 31 35 36 38">
    <location>
        <position position="91"/>
    </location>
    <ligand>
        <name>ADP</name>
        <dbReference type="ChEBI" id="CHEBI:456216"/>
    </ligand>
</feature>
<feature type="binding site" evidence="13 37">
    <location>
        <position position="91"/>
    </location>
    <ligand>
        <name>ATP</name>
        <dbReference type="ChEBI" id="CHEBI:30616"/>
    </ligand>
</feature>
<feature type="binding site" evidence="11 12 24 25 26 30 31">
    <location>
        <position position="92"/>
    </location>
    <ligand>
        <name>ADP</name>
        <dbReference type="ChEBI" id="CHEBI:456216"/>
    </ligand>
</feature>
<feature type="binding site" evidence="11 12 24 25 26 28 29 31">
    <location>
        <position position="158"/>
    </location>
    <ligand>
        <name>ADP</name>
        <dbReference type="ChEBI" id="CHEBI:456216"/>
    </ligand>
</feature>
<feature type="binding site" evidence="11 24">
    <location>
        <position position="159"/>
    </location>
    <ligand>
        <name>ADP</name>
        <dbReference type="ChEBI" id="CHEBI:456216"/>
    </ligand>
</feature>
<feature type="binding site" evidence="11 12 13 24 26 27 28 29 30 31 35 36">
    <location>
        <position position="412"/>
    </location>
    <ligand>
        <name>ADP</name>
        <dbReference type="ChEBI" id="CHEBI:456216"/>
    </ligand>
</feature>
<feature type="binding site" evidence="11 12 13 24 27 28 35 36">
    <location>
        <position position="505"/>
    </location>
    <ligand>
        <name>ADP</name>
        <dbReference type="ChEBI" id="CHEBI:456216"/>
    </ligand>
</feature>
<feature type="modified residue" description="N-acetylmethionine" evidence="2 42 47 48">
    <location>
        <position position="1"/>
    </location>
</feature>
<feature type="modified residue" description="Phosphoserine" evidence="49">
    <location>
        <position position="6"/>
    </location>
</feature>
<feature type="modified residue" description="Phosphotyrosine" evidence="44">
    <location>
        <position position="181"/>
    </location>
</feature>
<feature type="modified residue" description="N6-acetyllysine" evidence="43">
    <location>
        <position position="199"/>
    </location>
</feature>
<feature type="modified residue" description="N6-acetyllysine" evidence="43">
    <location>
        <position position="400"/>
    </location>
</feature>
<feature type="modified residue" description="Phosphoserine" evidence="49">
    <location>
        <position position="491"/>
    </location>
</feature>
<feature type="modified residue" description="N6-acetyllysine" evidence="1">
    <location>
        <position position="494"/>
    </location>
</feature>
<feature type="modified residue" description="Phosphoserine" evidence="41 44 45 46 49 50">
    <location>
        <position position="544"/>
    </location>
</feature>
<feature type="modified residue" description="Phosphoserine" evidence="45 46 49">
    <location>
        <position position="551"/>
    </location>
</feature>
<feature type="sequence variant" id="VAR_036258" description="In a breast cancer sample; somatic mutation; dbSNP:rs537218073." evidence="6">
    <original>V</original>
    <variation>L</variation>
    <location>
        <position position="7"/>
    </location>
</feature>
<feature type="sequence variant" id="VAR_090325" description="In IDDPMGS; uncertain significance." evidence="14">
    <original>P</original>
    <variation>L</variation>
    <location>
        <position position="38"/>
    </location>
</feature>
<feature type="sequence variant" id="VAR_090326" description="In IDDPMGS; likely pathogenic; the orthologous yeast mutation induces yeast lethality suggesting loss of function." evidence="14">
    <location>
        <begin position="92"/>
        <end position="556"/>
    </location>
</feature>
<feature type="sequence variant" id="VAR_090327" description="In IDDPMGS; uncertain significance; the orthologous yeast mutation induces yeast lethality suggesting loss of function." evidence="14">
    <original>K</original>
    <variation>R</variation>
    <location>
        <position position="159"/>
    </location>
</feature>
<feature type="sequence variant" id="VAR_090328" description="In IDDPMGS; likely pathogenic; the orthologous yeast mutation induces yeast lethality suggesting loss of function." evidence="14">
    <location>
        <begin position="262"/>
        <end position="556"/>
    </location>
</feature>
<feature type="sequence conflict" description="In Ref. 8; AAA61060." evidence="18" ref="8">
    <original>R</original>
    <variation>S</variation>
    <location>
        <position position="480"/>
    </location>
</feature>
<feature type="sequence conflict" description="In Ref. 1; CAA37064." evidence="18" ref="1">
    <original>SKDD</original>
    <variation>ILRI</variation>
    <location>
        <begin position="537"/>
        <end position="540"/>
    </location>
</feature>
<feature type="turn" evidence="59">
    <location>
        <begin position="3"/>
        <end position="5"/>
    </location>
</feature>
<feature type="strand" evidence="51">
    <location>
        <begin position="8"/>
        <end position="13"/>
    </location>
</feature>
<feature type="helix" evidence="51">
    <location>
        <begin position="15"/>
        <end position="32"/>
    </location>
</feature>
<feature type="helix" evidence="51">
    <location>
        <begin position="33"/>
        <end position="35"/>
    </location>
</feature>
<feature type="strand" evidence="56">
    <location>
        <begin position="37"/>
        <end position="39"/>
    </location>
</feature>
<feature type="strand" evidence="51">
    <location>
        <begin position="42"/>
        <end position="46"/>
    </location>
</feature>
<feature type="strand" evidence="51">
    <location>
        <begin position="48"/>
        <end position="50"/>
    </location>
</feature>
<feature type="strand" evidence="51">
    <location>
        <begin position="52"/>
        <end position="55"/>
    </location>
</feature>
<feature type="helix" evidence="51">
    <location>
        <begin position="58"/>
        <end position="64"/>
    </location>
</feature>
<feature type="helix" evidence="51">
    <location>
        <begin position="70"/>
        <end position="85"/>
    </location>
</feature>
<feature type="strand" evidence="52">
    <location>
        <begin position="86"/>
        <end position="88"/>
    </location>
</feature>
<feature type="helix" evidence="51">
    <location>
        <begin position="90"/>
        <end position="109"/>
    </location>
</feature>
<feature type="helix" evidence="51">
    <location>
        <begin position="114"/>
        <end position="135"/>
    </location>
</feature>
<feature type="strand" evidence="54">
    <location>
        <begin position="137"/>
        <end position="139"/>
    </location>
</feature>
<feature type="helix" evidence="51">
    <location>
        <begin position="140"/>
        <end position="143"/>
    </location>
</feature>
<feature type="helix" evidence="51">
    <location>
        <begin position="146"/>
        <end position="156"/>
    </location>
</feature>
<feature type="helix" evidence="54">
    <location>
        <begin position="160"/>
        <end position="164"/>
    </location>
</feature>
<feature type="helix" evidence="51">
    <location>
        <begin position="165"/>
        <end position="178"/>
    </location>
</feature>
<feature type="strand" evidence="55">
    <location>
        <begin position="181"/>
        <end position="183"/>
    </location>
</feature>
<feature type="helix" evidence="58">
    <location>
        <begin position="184"/>
        <end position="186"/>
    </location>
</feature>
<feature type="strand" evidence="55">
    <location>
        <begin position="187"/>
        <end position="189"/>
    </location>
</feature>
<feature type="strand" evidence="51">
    <location>
        <begin position="194"/>
        <end position="199"/>
    </location>
</feature>
<feature type="helix" evidence="51">
    <location>
        <begin position="205"/>
        <end position="207"/>
    </location>
</feature>
<feature type="strand" evidence="51">
    <location>
        <begin position="209"/>
        <end position="217"/>
    </location>
</feature>
<feature type="strand" evidence="57">
    <location>
        <begin position="223"/>
        <end position="225"/>
    </location>
</feature>
<feature type="strand" evidence="51">
    <location>
        <begin position="227"/>
        <end position="239"/>
    </location>
</feature>
<feature type="strand" evidence="56">
    <location>
        <begin position="247"/>
        <end position="249"/>
    </location>
</feature>
<feature type="strand" evidence="51">
    <location>
        <begin position="250"/>
        <end position="252"/>
    </location>
</feature>
<feature type="strand" evidence="51">
    <location>
        <begin position="254"/>
        <end position="256"/>
    </location>
</feature>
<feature type="helix" evidence="51">
    <location>
        <begin position="257"/>
        <end position="259"/>
    </location>
</feature>
<feature type="helix" evidence="51">
    <location>
        <begin position="260"/>
        <end position="280"/>
    </location>
</feature>
<feature type="strand" evidence="51">
    <location>
        <begin position="285"/>
        <end position="290"/>
    </location>
</feature>
<feature type="helix" evidence="51">
    <location>
        <begin position="294"/>
        <end position="303"/>
    </location>
</feature>
<feature type="strand" evidence="51">
    <location>
        <begin position="306"/>
        <end position="308"/>
    </location>
</feature>
<feature type="helix" evidence="51">
    <location>
        <begin position="313"/>
        <end position="323"/>
    </location>
</feature>
<feature type="strand" evidence="51">
    <location>
        <begin position="328"/>
        <end position="331"/>
    </location>
</feature>
<feature type="strand" evidence="53">
    <location>
        <begin position="334"/>
        <end position="338"/>
    </location>
</feature>
<feature type="helix" evidence="51">
    <location>
        <begin position="342"/>
        <end position="344"/>
    </location>
</feature>
<feature type="strand" evidence="51">
    <location>
        <begin position="346"/>
        <end position="356"/>
    </location>
</feature>
<feature type="strand" evidence="51">
    <location>
        <begin position="359"/>
        <end position="370"/>
    </location>
</feature>
<feature type="strand" evidence="51">
    <location>
        <begin position="373"/>
        <end position="377"/>
    </location>
</feature>
<feature type="helix" evidence="51">
    <location>
        <begin position="382"/>
        <end position="404"/>
    </location>
</feature>
<feature type="strand" evidence="51">
    <location>
        <begin position="407"/>
        <end position="410"/>
    </location>
</feature>
<feature type="turn" evidence="51">
    <location>
        <begin position="411"/>
        <end position="413"/>
    </location>
</feature>
<feature type="helix" evidence="51">
    <location>
        <begin position="414"/>
        <end position="426"/>
    </location>
</feature>
<feature type="helix" evidence="51">
    <location>
        <begin position="427"/>
        <end position="429"/>
    </location>
</feature>
<feature type="helix" evidence="51">
    <location>
        <begin position="433"/>
        <end position="445"/>
    </location>
</feature>
<feature type="helix" evidence="51">
    <location>
        <begin position="447"/>
        <end position="456"/>
    </location>
</feature>
<feature type="helix" evidence="51">
    <location>
        <begin position="460"/>
        <end position="476"/>
    </location>
</feature>
<feature type="helix" evidence="51">
    <location>
        <begin position="478"/>
        <end position="485"/>
    </location>
</feature>
<feature type="strand" evidence="51">
    <location>
        <begin position="486"/>
        <end position="489"/>
    </location>
</feature>
<feature type="turn" evidence="51">
    <location>
        <begin position="490"/>
        <end position="493"/>
    </location>
</feature>
<feature type="strand" evidence="51">
    <location>
        <begin position="494"/>
        <end position="497"/>
    </location>
</feature>
<feature type="helix" evidence="51">
    <location>
        <begin position="498"/>
        <end position="501"/>
    </location>
</feature>
<feature type="strand" evidence="51">
    <location>
        <begin position="504"/>
        <end position="506"/>
    </location>
</feature>
<feature type="helix" evidence="51">
    <location>
        <begin position="507"/>
        <end position="525"/>
    </location>
</feature>
<feature type="strand" evidence="51">
    <location>
        <begin position="527"/>
        <end position="533"/>
    </location>
</feature>
<dbReference type="EC" id="3.6.1.-" evidence="19 20 21"/>
<dbReference type="EMBL" id="X52882">
    <property type="protein sequence ID" value="CAA37064.1"/>
    <property type="molecule type" value="mRNA"/>
</dbReference>
<dbReference type="EMBL" id="BT006969">
    <property type="protein sequence ID" value="AAP35615.1"/>
    <property type="molecule type" value="mRNA"/>
</dbReference>
<dbReference type="EMBL" id="AL135914">
    <property type="status" value="NOT_ANNOTATED_CDS"/>
    <property type="molecule type" value="Genomic_DNA"/>
</dbReference>
<dbReference type="EMBL" id="CH471051">
    <property type="protein sequence ID" value="EAW47616.1"/>
    <property type="molecule type" value="Genomic_DNA"/>
</dbReference>
<dbReference type="EMBL" id="CH471051">
    <property type="protein sequence ID" value="EAW47618.1"/>
    <property type="molecule type" value="Genomic_DNA"/>
</dbReference>
<dbReference type="EMBL" id="BC000665">
    <property type="protein sequence ID" value="AAH00665.1"/>
    <property type="molecule type" value="mRNA"/>
</dbReference>
<dbReference type="EMBL" id="M26885">
    <property type="protein sequence ID" value="AAA61059.1"/>
    <property type="molecule type" value="Genomic_DNA"/>
</dbReference>
<dbReference type="EMBL" id="M27272">
    <property type="protein sequence ID" value="AAA61060.1"/>
    <property type="molecule type" value="Genomic_DNA"/>
</dbReference>
<dbReference type="EMBL" id="M26889">
    <property type="protein sequence ID" value="AAA61060.1"/>
    <property type="status" value="JOINED"/>
    <property type="molecule type" value="Genomic_DNA"/>
</dbReference>
<dbReference type="CCDS" id="CCDS5269.1"/>
<dbReference type="PIR" id="S10486">
    <property type="entry name" value="S10486"/>
</dbReference>
<dbReference type="RefSeq" id="NP_110379.2">
    <property type="nucleotide sequence ID" value="NM_030752.3"/>
</dbReference>
<dbReference type="PDB" id="6NR8">
    <property type="method" value="EM"/>
    <property type="resolution" value="7.80 A"/>
    <property type="chains" value="A/I=1-534"/>
</dbReference>
<dbReference type="PDB" id="6NR9">
    <property type="method" value="EM"/>
    <property type="resolution" value="8.50 A"/>
    <property type="chains" value="A/I=1-534"/>
</dbReference>
<dbReference type="PDB" id="6NRA">
    <property type="method" value="EM"/>
    <property type="resolution" value="7.70 A"/>
    <property type="chains" value="A/I=1-534"/>
</dbReference>
<dbReference type="PDB" id="6NRB">
    <property type="method" value="EM"/>
    <property type="resolution" value="8.70 A"/>
    <property type="chains" value="A/I=1-534"/>
</dbReference>
<dbReference type="PDB" id="6NRC">
    <property type="method" value="EM"/>
    <property type="resolution" value="8.30 A"/>
    <property type="chains" value="A/I=1-534"/>
</dbReference>
<dbReference type="PDB" id="6NRD">
    <property type="method" value="EM"/>
    <property type="resolution" value="8.20 A"/>
    <property type="chains" value="A/I=1-534"/>
</dbReference>
<dbReference type="PDB" id="6QB8">
    <property type="method" value="EM"/>
    <property type="resolution" value="3.97 A"/>
    <property type="chains" value="A/a=1-556"/>
</dbReference>
<dbReference type="PDB" id="7LUM">
    <property type="method" value="EM"/>
    <property type="resolution" value="4.50 A"/>
    <property type="chains" value="G/O=1-556"/>
</dbReference>
<dbReference type="PDB" id="7LUP">
    <property type="method" value="EM"/>
    <property type="resolution" value="6.20 A"/>
    <property type="chains" value="G/O=1-556"/>
</dbReference>
<dbReference type="PDB" id="7NVL">
    <property type="method" value="EM"/>
    <property type="resolution" value="2.50 A"/>
    <property type="chains" value="A/a=1-556"/>
</dbReference>
<dbReference type="PDB" id="7NVM">
    <property type="method" value="EM"/>
    <property type="resolution" value="3.10 A"/>
    <property type="chains" value="A/a=1-556"/>
</dbReference>
<dbReference type="PDB" id="7NVN">
    <property type="method" value="EM"/>
    <property type="resolution" value="3.00 A"/>
    <property type="chains" value="A/a=1-556"/>
</dbReference>
<dbReference type="PDB" id="7NVO">
    <property type="method" value="EM"/>
    <property type="resolution" value="3.50 A"/>
    <property type="chains" value="A/a=1-556"/>
</dbReference>
<dbReference type="PDB" id="7TRG">
    <property type="method" value="EM"/>
    <property type="resolution" value="3.00 A"/>
    <property type="chains" value="G=1-556"/>
</dbReference>
<dbReference type="PDB" id="7TTN">
    <property type="method" value="EM"/>
    <property type="resolution" value="3.30 A"/>
    <property type="chains" value="G=1-556"/>
</dbReference>
<dbReference type="PDB" id="7TTT">
    <property type="method" value="EM"/>
    <property type="resolution" value="2.90 A"/>
    <property type="chains" value="G=1-556"/>
</dbReference>
<dbReference type="PDB" id="7TUB">
    <property type="method" value="EM"/>
    <property type="resolution" value="3.60 A"/>
    <property type="chains" value="G=1-556"/>
</dbReference>
<dbReference type="PDB" id="7WU7">
    <property type="method" value="EM"/>
    <property type="resolution" value="3.85 A"/>
    <property type="chains" value="A/I=1-556"/>
</dbReference>
<dbReference type="PDB" id="7WZ3">
    <property type="method" value="EM"/>
    <property type="resolution" value="4.10 A"/>
    <property type="chains" value="A/a=1-556"/>
</dbReference>
<dbReference type="PDB" id="7X0A">
    <property type="method" value="EM"/>
    <property type="resolution" value="3.10 A"/>
    <property type="chains" value="A/a=1-556"/>
</dbReference>
<dbReference type="PDB" id="7X0S">
    <property type="method" value="EM"/>
    <property type="resolution" value="3.10 A"/>
    <property type="chains" value="A/a=1-556"/>
</dbReference>
<dbReference type="PDB" id="7X0V">
    <property type="method" value="EM"/>
    <property type="resolution" value="3.20 A"/>
    <property type="chains" value="A/a=1-556"/>
</dbReference>
<dbReference type="PDB" id="7X3J">
    <property type="method" value="EM"/>
    <property type="resolution" value="4.20 A"/>
    <property type="chains" value="A/a=1-556"/>
</dbReference>
<dbReference type="PDB" id="7X3U">
    <property type="method" value="EM"/>
    <property type="resolution" value="3.30 A"/>
    <property type="chains" value="A/a=1-556"/>
</dbReference>
<dbReference type="PDB" id="7X6Q">
    <property type="method" value="EM"/>
    <property type="resolution" value="4.50 A"/>
    <property type="chains" value="A/a=1-556"/>
</dbReference>
<dbReference type="PDB" id="7X7Y">
    <property type="method" value="EM"/>
    <property type="resolution" value="3.80 A"/>
    <property type="chains" value="A/a=1-556"/>
</dbReference>
<dbReference type="PDB" id="8HKI">
    <property type="method" value="EM"/>
    <property type="resolution" value="3.10 A"/>
    <property type="chains" value="A/a=1-556"/>
</dbReference>
<dbReference type="PDB" id="8I1U">
    <property type="method" value="EM"/>
    <property type="resolution" value="3.24 A"/>
    <property type="chains" value="A/I=1-556"/>
</dbReference>
<dbReference type="PDB" id="8I9U">
    <property type="method" value="EM"/>
    <property type="resolution" value="3.10 A"/>
    <property type="chains" value="A/I=1-556"/>
</dbReference>
<dbReference type="PDB" id="8IB8">
    <property type="method" value="EM"/>
    <property type="resolution" value="4.42 A"/>
    <property type="chains" value="A/I=1-556"/>
</dbReference>
<dbReference type="PDB" id="8SFE">
    <property type="method" value="EM"/>
    <property type="resolution" value="3.36 A"/>
    <property type="chains" value="A/a=2-537"/>
</dbReference>
<dbReference type="PDB" id="8SFF">
    <property type="method" value="EM"/>
    <property type="resolution" value="3.20 A"/>
    <property type="chains" value="A/a=2-537"/>
</dbReference>
<dbReference type="PDB" id="8SG8">
    <property type="method" value="EM"/>
    <property type="resolution" value="3.00 A"/>
    <property type="chains" value="A/a=2-537"/>
</dbReference>
<dbReference type="PDB" id="8SG9">
    <property type="method" value="EM"/>
    <property type="resolution" value="2.90 A"/>
    <property type="chains" value="A/a=2-537"/>
</dbReference>
<dbReference type="PDB" id="8SGC">
    <property type="method" value="EM"/>
    <property type="resolution" value="2.90 A"/>
    <property type="chains" value="A/a=2-537"/>
</dbReference>
<dbReference type="PDB" id="8SGL">
    <property type="method" value="EM"/>
    <property type="resolution" value="2.90 A"/>
    <property type="chains" value="A/a=2-537"/>
</dbReference>
<dbReference type="PDB" id="8SGQ">
    <property type="method" value="EM"/>
    <property type="resolution" value="3.70 A"/>
    <property type="chains" value="A/a=2-537"/>
</dbReference>
<dbReference type="PDB" id="8SH9">
    <property type="method" value="EM"/>
    <property type="resolution" value="2.70 A"/>
    <property type="chains" value="A/a=2-537"/>
</dbReference>
<dbReference type="PDB" id="8SHA">
    <property type="method" value="EM"/>
    <property type="resolution" value="3.00 A"/>
    <property type="chains" value="A/a=2-537"/>
</dbReference>
<dbReference type="PDB" id="8SHD">
    <property type="method" value="EM"/>
    <property type="resolution" value="2.90 A"/>
    <property type="chains" value="A/a=2-537"/>
</dbReference>
<dbReference type="PDB" id="8SHE">
    <property type="method" value="EM"/>
    <property type="resolution" value="2.80 A"/>
    <property type="chains" value="A/a=2-537"/>
</dbReference>
<dbReference type="PDB" id="8SHF">
    <property type="method" value="EM"/>
    <property type="resolution" value="3.00 A"/>
    <property type="chains" value="A/a=2-537"/>
</dbReference>
<dbReference type="PDB" id="8SHG">
    <property type="method" value="EM"/>
    <property type="resolution" value="2.80 A"/>
    <property type="chains" value="A/a=2-537"/>
</dbReference>
<dbReference type="PDB" id="8SHL">
    <property type="method" value="EM"/>
    <property type="resolution" value="3.00 A"/>
    <property type="chains" value="A/a=2-537"/>
</dbReference>
<dbReference type="PDB" id="8SHN">
    <property type="method" value="EM"/>
    <property type="resolution" value="2.80 A"/>
    <property type="chains" value="A/a=2-537"/>
</dbReference>
<dbReference type="PDB" id="8SHO">
    <property type="method" value="EM"/>
    <property type="resolution" value="3.00 A"/>
    <property type="chains" value="A/a=2-537"/>
</dbReference>
<dbReference type="PDB" id="8SHP">
    <property type="method" value="EM"/>
    <property type="resolution" value="3.00 A"/>
    <property type="chains" value="A/a=2-537"/>
</dbReference>
<dbReference type="PDB" id="8SHQ">
    <property type="method" value="EM"/>
    <property type="resolution" value="2.90 A"/>
    <property type="chains" value="A/a=2-537"/>
</dbReference>
<dbReference type="PDB" id="8SHT">
    <property type="method" value="EM"/>
    <property type="resolution" value="3.00 A"/>
    <property type="chains" value="A/a=2-537"/>
</dbReference>
<dbReference type="PDBsum" id="6NR8"/>
<dbReference type="PDBsum" id="6NR9"/>
<dbReference type="PDBsum" id="6NRA"/>
<dbReference type="PDBsum" id="6NRB"/>
<dbReference type="PDBsum" id="6NRC"/>
<dbReference type="PDBsum" id="6NRD"/>
<dbReference type="PDBsum" id="6QB8"/>
<dbReference type="PDBsum" id="7LUM"/>
<dbReference type="PDBsum" id="7LUP"/>
<dbReference type="PDBsum" id="7NVL"/>
<dbReference type="PDBsum" id="7NVM"/>
<dbReference type="PDBsum" id="7NVN"/>
<dbReference type="PDBsum" id="7NVO"/>
<dbReference type="PDBsum" id="7TRG"/>
<dbReference type="PDBsum" id="7TTN"/>
<dbReference type="PDBsum" id="7TTT"/>
<dbReference type="PDBsum" id="7TUB"/>
<dbReference type="PDBsum" id="7WU7"/>
<dbReference type="PDBsum" id="7WZ3"/>
<dbReference type="PDBsum" id="7X0A"/>
<dbReference type="PDBsum" id="7X0S"/>
<dbReference type="PDBsum" id="7X0V"/>
<dbReference type="PDBsum" id="7X3J"/>
<dbReference type="PDBsum" id="7X3U"/>
<dbReference type="PDBsum" id="7X6Q"/>
<dbReference type="PDBsum" id="7X7Y"/>
<dbReference type="PDBsum" id="8HKI"/>
<dbReference type="PDBsum" id="8I1U"/>
<dbReference type="PDBsum" id="8I9U"/>
<dbReference type="PDBsum" id="8IB8"/>
<dbReference type="PDBsum" id="8SFE"/>
<dbReference type="PDBsum" id="8SFF"/>
<dbReference type="PDBsum" id="8SG8"/>
<dbReference type="PDBsum" id="8SG9"/>
<dbReference type="PDBsum" id="8SGC"/>
<dbReference type="PDBsum" id="8SGL"/>
<dbReference type="PDBsum" id="8SGQ"/>
<dbReference type="PDBsum" id="8SH9"/>
<dbReference type="PDBsum" id="8SHA"/>
<dbReference type="PDBsum" id="8SHD"/>
<dbReference type="PDBsum" id="8SHE"/>
<dbReference type="PDBsum" id="8SHF"/>
<dbReference type="PDBsum" id="8SHG"/>
<dbReference type="PDBsum" id="8SHL"/>
<dbReference type="PDBsum" id="8SHN"/>
<dbReference type="PDBsum" id="8SHO"/>
<dbReference type="PDBsum" id="8SHP"/>
<dbReference type="PDBsum" id="8SHQ"/>
<dbReference type="PDBsum" id="8SHT"/>
<dbReference type="EMDB" id="EMD-0490"/>
<dbReference type="EMDB" id="EMD-0491"/>
<dbReference type="EMDB" id="EMD-0492"/>
<dbReference type="EMDB" id="EMD-0493"/>
<dbReference type="EMDB" id="EMD-0494"/>
<dbReference type="EMDB" id="EMD-0495"/>
<dbReference type="EMDB" id="EMD-12605"/>
<dbReference type="EMDB" id="EMD-12606"/>
<dbReference type="EMDB" id="EMD-12607"/>
<dbReference type="EMDB" id="EMD-12608"/>
<dbReference type="EMDB" id="EMD-13754"/>
<dbReference type="EMDB" id="EMD-23522"/>
<dbReference type="EMDB" id="EMD-23526"/>
<dbReference type="EMDB" id="EMD-26089"/>
<dbReference type="EMDB" id="EMD-26120"/>
<dbReference type="EMDB" id="EMD-26123"/>
<dbReference type="EMDB" id="EMD-26131"/>
<dbReference type="EMDB" id="EMD-32823"/>
<dbReference type="EMDB" id="EMD-32903"/>
<dbReference type="EMDB" id="EMD-32922"/>
<dbReference type="EMDB" id="EMD-32923"/>
<dbReference type="EMDB" id="EMD-32926"/>
<dbReference type="EMDB" id="EMD-32989"/>
<dbReference type="EMDB" id="EMD-32993"/>
<dbReference type="EMDB" id="EMD-33025"/>
<dbReference type="EMDB" id="EMD-33053"/>
<dbReference type="EMDB" id="EMD-34852"/>
<dbReference type="EMDB" id="EMD-35122"/>
<dbReference type="EMDB" id="EMD-35284"/>
<dbReference type="EMDB" id="EMD-35335"/>
<dbReference type="EMDB" id="EMD-40439"/>
<dbReference type="EMDB" id="EMD-40440"/>
<dbReference type="EMDB" id="EMD-40452"/>
<dbReference type="EMDB" id="EMD-40453"/>
<dbReference type="EMDB" id="EMD-40454"/>
<dbReference type="EMDB" id="EMD-40461"/>
<dbReference type="EMDB" id="EMD-40464"/>
<dbReference type="EMDB" id="EMD-40481"/>
<dbReference type="EMDB" id="EMD-40482"/>
<dbReference type="EMDB" id="EMD-40484"/>
<dbReference type="EMDB" id="EMD-40485"/>
<dbReference type="EMDB" id="EMD-40486"/>
<dbReference type="EMDB" id="EMD-40487"/>
<dbReference type="EMDB" id="EMD-40488"/>
<dbReference type="EMDB" id="EMD-40489"/>
<dbReference type="EMDB" id="EMD-40490"/>
<dbReference type="EMDB" id="EMD-40491"/>
<dbReference type="EMDB" id="EMD-40492"/>
<dbReference type="EMDB" id="EMD-40494"/>
<dbReference type="EMDB" id="EMD-4489"/>
<dbReference type="SMR" id="P17987"/>
<dbReference type="BioGRID" id="112810">
    <property type="interactions" value="630"/>
</dbReference>
<dbReference type="ComplexPortal" id="CPX-6030">
    <property type="entry name" value="Chaperonin-containing T-complex"/>
</dbReference>
<dbReference type="CORUM" id="P17987"/>
<dbReference type="DIP" id="DIP-33676N"/>
<dbReference type="FunCoup" id="P17987">
    <property type="interactions" value="3731"/>
</dbReference>
<dbReference type="IntAct" id="P17987">
    <property type="interactions" value="332"/>
</dbReference>
<dbReference type="MINT" id="P17987"/>
<dbReference type="STRING" id="9606.ENSP00000317334"/>
<dbReference type="GlyGen" id="P17987">
    <property type="glycosylation" value="1 site, 1 O-linked glycan (1 site)"/>
</dbReference>
<dbReference type="iPTMnet" id="P17987"/>
<dbReference type="MetOSite" id="P17987"/>
<dbReference type="PhosphoSitePlus" id="P17987"/>
<dbReference type="SwissPalm" id="P17987"/>
<dbReference type="BioMuta" id="TCP1"/>
<dbReference type="DMDM" id="135538"/>
<dbReference type="OGP" id="P17987"/>
<dbReference type="REPRODUCTION-2DPAGE" id="IPI00290566"/>
<dbReference type="REPRODUCTION-2DPAGE" id="P17987"/>
<dbReference type="jPOST" id="P17987"/>
<dbReference type="MassIVE" id="P17987"/>
<dbReference type="PaxDb" id="9606-ENSP00000317334"/>
<dbReference type="PeptideAtlas" id="P17987"/>
<dbReference type="PRIDE" id="P17987"/>
<dbReference type="ProteomicsDB" id="53538"/>
<dbReference type="Pumba" id="P17987"/>
<dbReference type="Antibodypedia" id="20023">
    <property type="antibodies" value="668 antibodies from 38 providers"/>
</dbReference>
<dbReference type="DNASU" id="6950"/>
<dbReference type="Ensembl" id="ENST00000321394.12">
    <property type="protein sequence ID" value="ENSP00000317334.7"/>
    <property type="gene ID" value="ENSG00000120438.12"/>
</dbReference>
<dbReference type="GeneID" id="6950"/>
<dbReference type="KEGG" id="hsa:6950"/>
<dbReference type="MANE-Select" id="ENST00000321394.12">
    <property type="protein sequence ID" value="ENSP00000317334.7"/>
    <property type="RefSeq nucleotide sequence ID" value="NM_030752.3"/>
    <property type="RefSeq protein sequence ID" value="NP_110379.2"/>
</dbReference>
<dbReference type="UCSC" id="uc003qsr.4">
    <property type="organism name" value="human"/>
</dbReference>
<dbReference type="AGR" id="HGNC:11655"/>
<dbReference type="CTD" id="6950"/>
<dbReference type="DisGeNET" id="6950"/>
<dbReference type="GeneCards" id="TCP1"/>
<dbReference type="HGNC" id="HGNC:11655">
    <property type="gene designation" value="TCP1"/>
</dbReference>
<dbReference type="HPA" id="ENSG00000120438">
    <property type="expression patterns" value="Low tissue specificity"/>
</dbReference>
<dbReference type="MIM" id="186980">
    <property type="type" value="gene"/>
</dbReference>
<dbReference type="MIM" id="621021">
    <property type="type" value="phenotype"/>
</dbReference>
<dbReference type="neXtProt" id="NX_P17987"/>
<dbReference type="OpenTargets" id="ENSG00000120438"/>
<dbReference type="PharmGKB" id="PA36406"/>
<dbReference type="VEuPathDB" id="HostDB:ENSG00000120438"/>
<dbReference type="eggNOG" id="KOG0360">
    <property type="taxonomic scope" value="Eukaryota"/>
</dbReference>
<dbReference type="GeneTree" id="ENSGT00550000074878"/>
<dbReference type="InParanoid" id="P17987"/>
<dbReference type="OMA" id="RGPNDYQ"/>
<dbReference type="OrthoDB" id="496at2759"/>
<dbReference type="PAN-GO" id="P17987">
    <property type="GO annotations" value="3 GO annotations based on evolutionary models"/>
</dbReference>
<dbReference type="PhylomeDB" id="P17987"/>
<dbReference type="TreeFam" id="TF106331"/>
<dbReference type="BRENDA" id="3.6.4.B10">
    <property type="organism ID" value="2681"/>
</dbReference>
<dbReference type="PathwayCommons" id="P17987"/>
<dbReference type="Reactome" id="R-HSA-389957">
    <property type="pathway name" value="Prefoldin mediated transfer of substrate to CCT/TriC"/>
</dbReference>
<dbReference type="Reactome" id="R-HSA-389960">
    <property type="pathway name" value="Formation of tubulin folding intermediates by CCT/TriC"/>
</dbReference>
<dbReference type="Reactome" id="R-HSA-390450">
    <property type="pathway name" value="Folding of actin by CCT/TriC"/>
</dbReference>
<dbReference type="Reactome" id="R-HSA-390471">
    <property type="pathway name" value="Association of TriC/CCT with target proteins during biosynthesis"/>
</dbReference>
<dbReference type="Reactome" id="R-HSA-5620922">
    <property type="pathway name" value="BBSome-mediated cargo-targeting to cilium"/>
</dbReference>
<dbReference type="Reactome" id="R-HSA-6814122">
    <property type="pathway name" value="Cooperation of PDCL (PhLP1) and TRiC/CCT in G-protein beta folding"/>
</dbReference>
<dbReference type="Reactome" id="R-HSA-8950505">
    <property type="pathway name" value="Gene and protein expression by JAK-STAT signaling after Interleukin-12 stimulation"/>
</dbReference>
<dbReference type="SignaLink" id="P17987"/>
<dbReference type="SIGNOR" id="P17987"/>
<dbReference type="BioGRID-ORCS" id="6950">
    <property type="hits" value="820 hits in 1161 CRISPR screens"/>
</dbReference>
<dbReference type="CD-CODE" id="8C2F96ED">
    <property type="entry name" value="Centrosome"/>
</dbReference>
<dbReference type="CD-CODE" id="DEE660B4">
    <property type="entry name" value="Stress granule"/>
</dbReference>
<dbReference type="CD-CODE" id="FB4E32DD">
    <property type="entry name" value="Presynaptic clusters and postsynaptic densities"/>
</dbReference>
<dbReference type="ChiTaRS" id="TCP1">
    <property type="organism name" value="human"/>
</dbReference>
<dbReference type="GeneWiki" id="T-complex_1"/>
<dbReference type="GenomeRNAi" id="6950"/>
<dbReference type="Pharos" id="P17987">
    <property type="development level" value="Tbio"/>
</dbReference>
<dbReference type="PRO" id="PR:P17987"/>
<dbReference type="Proteomes" id="UP000005640">
    <property type="component" value="Chromosome 6"/>
</dbReference>
<dbReference type="RNAct" id="P17987">
    <property type="molecule type" value="protein"/>
</dbReference>
<dbReference type="Bgee" id="ENSG00000120438">
    <property type="expression patterns" value="Expressed in primordial germ cell in gonad and 200 other cell types or tissues"/>
</dbReference>
<dbReference type="ExpressionAtlas" id="P17987">
    <property type="expression patterns" value="baseline and differential"/>
</dbReference>
<dbReference type="GO" id="GO:0001669">
    <property type="term" value="C:acrosomal vesicle"/>
    <property type="evidence" value="ECO:0007669"/>
    <property type="project" value="Ensembl"/>
</dbReference>
<dbReference type="GO" id="GO:0044297">
    <property type="term" value="C:cell body"/>
    <property type="evidence" value="ECO:0007669"/>
    <property type="project" value="Ensembl"/>
</dbReference>
<dbReference type="GO" id="GO:0005813">
    <property type="term" value="C:centrosome"/>
    <property type="evidence" value="ECO:0000314"/>
    <property type="project" value="MGI"/>
</dbReference>
<dbReference type="GO" id="GO:0005832">
    <property type="term" value="C:chaperonin-containing T-complex"/>
    <property type="evidence" value="ECO:0000314"/>
    <property type="project" value="UniProtKB"/>
</dbReference>
<dbReference type="GO" id="GO:0005829">
    <property type="term" value="C:cytosol"/>
    <property type="evidence" value="ECO:0000304"/>
    <property type="project" value="Reactome"/>
</dbReference>
<dbReference type="GO" id="GO:0070062">
    <property type="term" value="C:extracellular exosome"/>
    <property type="evidence" value="ECO:0007005"/>
    <property type="project" value="UniProtKB"/>
</dbReference>
<dbReference type="GO" id="GO:0005794">
    <property type="term" value="C:Golgi apparatus"/>
    <property type="evidence" value="ECO:0007669"/>
    <property type="project" value="Ensembl"/>
</dbReference>
<dbReference type="GO" id="GO:0000792">
    <property type="term" value="C:heterochromatin"/>
    <property type="evidence" value="ECO:0007669"/>
    <property type="project" value="Ensembl"/>
</dbReference>
<dbReference type="GO" id="GO:0005874">
    <property type="term" value="C:microtubule"/>
    <property type="evidence" value="ECO:0000314"/>
    <property type="project" value="UniProtKB"/>
</dbReference>
<dbReference type="GO" id="GO:0000242">
    <property type="term" value="C:pericentriolar material"/>
    <property type="evidence" value="ECO:0007669"/>
    <property type="project" value="Ensembl"/>
</dbReference>
<dbReference type="GO" id="GO:0002199">
    <property type="term" value="C:zona pellucida receptor complex"/>
    <property type="evidence" value="ECO:0007669"/>
    <property type="project" value="Ensembl"/>
</dbReference>
<dbReference type="GO" id="GO:0005524">
    <property type="term" value="F:ATP binding"/>
    <property type="evidence" value="ECO:0007669"/>
    <property type="project" value="UniProtKB-KW"/>
</dbReference>
<dbReference type="GO" id="GO:0016887">
    <property type="term" value="F:ATP hydrolysis activity"/>
    <property type="evidence" value="ECO:0007669"/>
    <property type="project" value="InterPro"/>
</dbReference>
<dbReference type="GO" id="GO:0140662">
    <property type="term" value="F:ATP-dependent protein folding chaperone"/>
    <property type="evidence" value="ECO:0007669"/>
    <property type="project" value="InterPro"/>
</dbReference>
<dbReference type="GO" id="GO:0044183">
    <property type="term" value="F:protein folding chaperone"/>
    <property type="evidence" value="ECO:0000314"/>
    <property type="project" value="BHF-UCL"/>
</dbReference>
<dbReference type="GO" id="GO:0003723">
    <property type="term" value="F:RNA binding"/>
    <property type="evidence" value="ECO:0007005"/>
    <property type="project" value="UniProtKB"/>
</dbReference>
<dbReference type="GO" id="GO:0031625">
    <property type="term" value="F:ubiquitin protein ligase binding"/>
    <property type="evidence" value="ECO:0000353"/>
    <property type="project" value="ParkinsonsUK-UCL"/>
</dbReference>
<dbReference type="GO" id="GO:0051082">
    <property type="term" value="F:unfolded protein binding"/>
    <property type="evidence" value="ECO:0000318"/>
    <property type="project" value="GO_Central"/>
</dbReference>
<dbReference type="GO" id="GO:0007339">
    <property type="term" value="P:binding of sperm to zona pellucida"/>
    <property type="evidence" value="ECO:0007669"/>
    <property type="project" value="Ensembl"/>
</dbReference>
<dbReference type="GO" id="GO:0051086">
    <property type="term" value="P:chaperone mediated protein folding independent of cofactor"/>
    <property type="evidence" value="ECO:0000315"/>
    <property type="project" value="BHF-UCL"/>
</dbReference>
<dbReference type="GO" id="GO:0061077">
    <property type="term" value="P:chaperone-mediated protein folding"/>
    <property type="evidence" value="ECO:0000314"/>
    <property type="project" value="ComplexPortal"/>
</dbReference>
<dbReference type="GO" id="GO:1904851">
    <property type="term" value="P:positive regulation of establishment of protein localization to telomere"/>
    <property type="evidence" value="ECO:0000315"/>
    <property type="project" value="BHF-UCL"/>
</dbReference>
<dbReference type="GO" id="GO:1904871">
    <property type="term" value="P:positive regulation of protein localization to Cajal body"/>
    <property type="evidence" value="ECO:0007001"/>
    <property type="project" value="BHF-UCL"/>
</dbReference>
<dbReference type="GO" id="GO:1904874">
    <property type="term" value="P:positive regulation of telomerase RNA localization to Cajal body"/>
    <property type="evidence" value="ECO:0000315"/>
    <property type="project" value="BHF-UCL"/>
</dbReference>
<dbReference type="GO" id="GO:0032212">
    <property type="term" value="P:positive regulation of telomere maintenance via telomerase"/>
    <property type="evidence" value="ECO:0000315"/>
    <property type="project" value="BHF-UCL"/>
</dbReference>
<dbReference type="GO" id="GO:0006457">
    <property type="term" value="P:protein folding"/>
    <property type="evidence" value="ECO:0000314"/>
    <property type="project" value="FlyBase"/>
</dbReference>
<dbReference type="GO" id="GO:0050821">
    <property type="term" value="P:protein stabilization"/>
    <property type="evidence" value="ECO:0000315"/>
    <property type="project" value="BHF-UCL"/>
</dbReference>
<dbReference type="GO" id="GO:0090666">
    <property type="term" value="P:scaRNA localization to Cajal body"/>
    <property type="evidence" value="ECO:0000315"/>
    <property type="project" value="BHF-UCL"/>
</dbReference>
<dbReference type="GO" id="GO:0007021">
    <property type="term" value="P:tubulin complex assembly"/>
    <property type="evidence" value="ECO:0000303"/>
    <property type="project" value="UniProtKB"/>
</dbReference>
<dbReference type="CDD" id="cd03335">
    <property type="entry name" value="TCP1_alpha"/>
    <property type="match status" value="1"/>
</dbReference>
<dbReference type="FunFam" id="3.50.7.10:FF:000009">
    <property type="entry name" value="T-complex protein 1 subunit alpha"/>
    <property type="match status" value="1"/>
</dbReference>
<dbReference type="FunFam" id="3.30.260.10:FF:000022">
    <property type="entry name" value="T-complex protein 1 subunit eta"/>
    <property type="match status" value="1"/>
</dbReference>
<dbReference type="FunFam" id="1.10.560.10:FF:000070">
    <property type="entry name" value="Uncharacterized protein"/>
    <property type="match status" value="1"/>
</dbReference>
<dbReference type="FunFam" id="3.30.260.10:FF:000040">
    <property type="entry name" value="Uncharacterized protein"/>
    <property type="match status" value="1"/>
</dbReference>
<dbReference type="Gene3D" id="3.50.7.10">
    <property type="entry name" value="GroEL"/>
    <property type="match status" value="1"/>
</dbReference>
<dbReference type="Gene3D" id="1.10.560.10">
    <property type="entry name" value="GroEL-like equatorial domain"/>
    <property type="match status" value="1"/>
</dbReference>
<dbReference type="Gene3D" id="3.30.260.10">
    <property type="entry name" value="TCP-1-like chaperonin intermediate domain"/>
    <property type="match status" value="1"/>
</dbReference>
<dbReference type="InterPro" id="IPR012715">
    <property type="entry name" value="Chap_CCT_alpha"/>
</dbReference>
<dbReference type="InterPro" id="IPR017998">
    <property type="entry name" value="Chaperone_TCP-1"/>
</dbReference>
<dbReference type="InterPro" id="IPR002194">
    <property type="entry name" value="Chaperonin_TCP-1_CS"/>
</dbReference>
<dbReference type="InterPro" id="IPR002423">
    <property type="entry name" value="Cpn60/GroEL/TCP-1"/>
</dbReference>
<dbReference type="InterPro" id="IPR027409">
    <property type="entry name" value="GroEL-like_apical_dom_sf"/>
</dbReference>
<dbReference type="InterPro" id="IPR027413">
    <property type="entry name" value="GROEL-like_equatorial_sf"/>
</dbReference>
<dbReference type="InterPro" id="IPR027410">
    <property type="entry name" value="TCP-1-like_intermed_sf"/>
</dbReference>
<dbReference type="InterPro" id="IPR053374">
    <property type="entry name" value="TCP-1_chaperonin"/>
</dbReference>
<dbReference type="InterPro" id="IPR054827">
    <property type="entry name" value="thermosome_alpha"/>
</dbReference>
<dbReference type="NCBIfam" id="TIGR02340">
    <property type="entry name" value="chap_CCT_alpha"/>
    <property type="match status" value="1"/>
</dbReference>
<dbReference type="NCBIfam" id="NF041082">
    <property type="entry name" value="thermosome_alpha"/>
    <property type="match status" value="1"/>
</dbReference>
<dbReference type="NCBIfam" id="NF041083">
    <property type="entry name" value="thermosome_beta"/>
    <property type="match status" value="1"/>
</dbReference>
<dbReference type="PANTHER" id="PTHR11353">
    <property type="entry name" value="CHAPERONIN"/>
    <property type="match status" value="1"/>
</dbReference>
<dbReference type="Pfam" id="PF00118">
    <property type="entry name" value="Cpn60_TCP1"/>
    <property type="match status" value="1"/>
</dbReference>
<dbReference type="PRINTS" id="PR00304">
    <property type="entry name" value="TCOMPLEXTCP1"/>
</dbReference>
<dbReference type="SUPFAM" id="SSF52029">
    <property type="entry name" value="GroEL apical domain-like"/>
    <property type="match status" value="1"/>
</dbReference>
<dbReference type="SUPFAM" id="SSF48592">
    <property type="entry name" value="GroEL equatorial domain-like"/>
    <property type="match status" value="1"/>
</dbReference>
<dbReference type="SUPFAM" id="SSF54849">
    <property type="entry name" value="GroEL-intermediate domain like"/>
    <property type="match status" value="1"/>
</dbReference>
<dbReference type="PROSITE" id="PS00750">
    <property type="entry name" value="TCP1_1"/>
    <property type="match status" value="1"/>
</dbReference>
<dbReference type="PROSITE" id="PS00751">
    <property type="entry name" value="TCP1_2"/>
    <property type="match status" value="1"/>
</dbReference>
<dbReference type="PROSITE" id="PS00995">
    <property type="entry name" value="TCP1_3"/>
    <property type="match status" value="1"/>
</dbReference>
<comment type="function">
    <text evidence="7 9 11 12 13">Component of the chaperonin-containing T-complex (TRiC), a molecular chaperone complex that assists the folding of actin, tubulin and other proteins upon ATP hydrolysis (PubMed:25467444, PubMed:36493755, PubMed:35449234, PubMed:37193829). The TRiC complex mediates the folding of WRAP53/TCAB1, thereby regulating telomere maintenance (PubMed:25467444). As part of the TRiC complex may play a role in the assembly of BBSome, a complex involved in ciliogenesis regulating transports vesicles to the cilia (PubMed:20080638).</text>
</comment>
<comment type="catalytic activity">
    <reaction evidence="19 20 21">
        <text>ATP + H2O = ADP + phosphate + H(+)</text>
        <dbReference type="Rhea" id="RHEA:13065"/>
        <dbReference type="ChEBI" id="CHEBI:15377"/>
        <dbReference type="ChEBI" id="CHEBI:15378"/>
        <dbReference type="ChEBI" id="CHEBI:30616"/>
        <dbReference type="ChEBI" id="CHEBI:43474"/>
        <dbReference type="ChEBI" id="CHEBI:456216"/>
    </reaction>
</comment>
<comment type="subunit">
    <text evidence="3 5 7 8 9 10 11 12 13">Component of the chaperonin-containing T-complex (TRiC), a hexadecamer composed of two identical back-to-back stacked rings enclosing a protein folding chamber (PubMed:1630492, PubMed:20080638, PubMed:25467444, PubMed:36493755, PubMed:35449234, PubMed:37193829). Each ring is made up of eight different subunits: TCP1/CCT1, CCT2, CCT3, CCT4, CCT5, CCT6A/CCT6, CCT7, CCT8 (PubMed:36493755, PubMed:35449234, PubMed:37193829). Interacts with PACRG (PubMed:14532270). Interacts with GBA1 (PubMed:21098288). Interacts with DLEC1 (PubMed:33144677).</text>
</comment>
<comment type="interaction">
    <interactant intactId="EBI-356553">
        <id>P17987</id>
    </interactant>
    <interactant intactId="EBI-3449344">
        <id>Q9Y2Y0</id>
        <label>ARL2BP</label>
    </interactant>
    <organismsDiffer>false</organismsDiffer>
    <experiments>3</experiments>
</comment>
<comment type="interaction">
    <interactant intactId="EBI-356553">
        <id>P17987</id>
    </interactant>
    <interactant intactId="EBI-23662416">
        <id>Q9ULD4-2</id>
        <label>BRPF3</label>
    </interactant>
    <organismsDiffer>false</organismsDiffer>
    <experiments>3</experiments>
</comment>
<comment type="interaction">
    <interactant intactId="EBI-356553">
        <id>P17987</id>
    </interactant>
    <interactant intactId="EBI-748628">
        <id>O43439</id>
        <label>CBFA2T2</label>
    </interactant>
    <organismsDiffer>false</organismsDiffer>
    <experiments>3</experiments>
</comment>
<comment type="interaction">
    <interactant intactId="EBI-356553">
        <id>P17987</id>
    </interactant>
    <interactant intactId="EBI-357407">
        <id>P78371</id>
        <label>CCT2</label>
    </interactant>
    <organismsDiffer>false</organismsDiffer>
    <experiments>7</experiments>
</comment>
<comment type="interaction">
    <interactant intactId="EBI-356553">
        <id>P17987</id>
    </interactant>
    <interactant intactId="EBI-356876">
        <id>P50991</id>
        <label>CCT4</label>
    </interactant>
    <organismsDiffer>false</organismsDiffer>
    <experiments>3</experiments>
</comment>
<comment type="interaction">
    <interactant intactId="EBI-356553">
        <id>P17987</id>
    </interactant>
    <interactant intactId="EBI-356507">
        <id>P50990</id>
        <label>CCT8</label>
    </interactant>
    <organismsDiffer>false</organismsDiffer>
    <experiments>3</experiments>
</comment>
<comment type="interaction">
    <interactant intactId="EBI-356553">
        <id>P17987</id>
    </interactant>
    <interactant intactId="EBI-1564609">
        <id>P04062</id>
        <label>GBA1</label>
    </interactant>
    <organismsDiffer>false</organismsDiffer>
    <experiments>2</experiments>
</comment>
<comment type="interaction">
    <interactant intactId="EBI-356553">
        <id>P17987</id>
    </interactant>
    <interactant intactId="EBI-2867394">
        <id>P83110</id>
        <label>HTRA3</label>
    </interactant>
    <organismsDiffer>false</organismsDiffer>
    <experiments>5</experiments>
</comment>
<comment type="interaction">
    <interactant intactId="EBI-356553">
        <id>P17987</id>
    </interactant>
    <interactant intactId="EBI-25469082">
        <id>P83110-1</id>
        <label>HTRA3</label>
    </interactant>
    <organismsDiffer>false</organismsDiffer>
    <experiments>6</experiments>
</comment>
<comment type="interaction">
    <interactant intactId="EBI-356553">
        <id>P17987</id>
    </interactant>
    <interactant intactId="EBI-22017714">
        <id>P83110-2</id>
        <label>HTRA3</label>
    </interactant>
    <organismsDiffer>false</organismsDiffer>
    <experiments>7</experiments>
</comment>
<comment type="interaction">
    <interactant intactId="EBI-356553">
        <id>P17987</id>
    </interactant>
    <interactant intactId="EBI-21776319">
        <id>P83105</id>
        <label>HTRA4</label>
    </interactant>
    <organismsDiffer>false</organismsDiffer>
    <experiments>7</experiments>
</comment>
<comment type="interaction">
    <interactant intactId="EBI-356553">
        <id>P17987</id>
    </interactant>
    <interactant intactId="EBI-466029">
        <id>P42858</id>
        <label>HTT</label>
    </interactant>
    <organismsDiffer>false</organismsDiffer>
    <experiments>3</experiments>
</comment>
<comment type="interaction">
    <interactant intactId="EBI-356553">
        <id>P17987</id>
    </interactant>
    <interactant intactId="EBI-7151999">
        <id>P78380</id>
        <label>OLR1</label>
    </interactant>
    <organismsDiffer>false</organismsDiffer>
    <experiments>5</experiments>
</comment>
<comment type="subcellular location">
    <subcellularLocation>
        <location evidence="5">Cytoplasm</location>
        <location evidence="5">Cytosol</location>
    </subcellularLocation>
    <subcellularLocation>
        <location evidence="4 7">Cytoplasm</location>
        <location evidence="4 7">Cytoskeleton</location>
        <location evidence="4 7">Microtubule organizing center</location>
        <location evidence="4 7">Centrosome</location>
    </subcellularLocation>
</comment>
<comment type="disease" evidence="14">
    <disease id="DI-06982">
        <name>Intellectual developmental disorder with polymicrogyria and seizures</name>
        <acronym>IDDPMGS</acronym>
        <description>An autosomal dominant neurologic disorder characterized by a broad phenotypic spectrum. Main clinical features are developmental delay of varying severity, intellectual disability, seizures, and polymicrogyria. Additional variable features are non-specific pyramidal or cerebellar signs, and visual impairment.</description>
        <dbReference type="MIM" id="621021"/>
    </disease>
    <text>The disease is caused by variants affecting the gene represented in this entry.</text>
</comment>
<comment type="similarity">
    <text evidence="18">Belongs to the TCP-1 chaperonin family.</text>
</comment>
<gene>
    <name evidence="15 17 22" type="primary">TCP1</name>
    <name evidence="16 22" type="synonym">CCT1</name>
    <name evidence="22" type="synonym">CCTA</name>
</gene>
<proteinExistence type="evidence at protein level"/>
<accession>P17987</accession>
<accession>E1P5B2</accession>
<accession>Q15556</accession>
<accession>Q5TCM3</accession>
<organism>
    <name type="scientific">Homo sapiens</name>
    <name type="common">Human</name>
    <dbReference type="NCBI Taxonomy" id="9606"/>
    <lineage>
        <taxon>Eukaryota</taxon>
        <taxon>Metazoa</taxon>
        <taxon>Chordata</taxon>
        <taxon>Craniata</taxon>
        <taxon>Vertebrata</taxon>
        <taxon>Euteleostomi</taxon>
        <taxon>Mammalia</taxon>
        <taxon>Eutheria</taxon>
        <taxon>Euarchontoglires</taxon>
        <taxon>Primates</taxon>
        <taxon>Haplorrhini</taxon>
        <taxon>Catarrhini</taxon>
        <taxon>Hominidae</taxon>
        <taxon>Homo</taxon>
    </lineage>
</organism>
<sequence length="556" mass="60344">MEGPLSVFGDRSTGETIRSQNVMAAASIANIVKSSLGPVGLDKMLVDDIGDVTITNDGATILKLLEVEHPAAKVLCELADLQDKEVGDGTTSVVIIAAELLKNADELVKQKIHPTSVISGYRLACKEAVRYINENLIVNTDELGRDCLINAAKTSMSSKIIGINGDFFANMVVDAVLAIKYTDIRGQPRYPVNSVNILKAHGRSQMESMLISGYALNCVVGSQGMPKRIVNAKIACLDFSLQKTKMKLGVQVVITDPEKLDQIRQRESDITKERIQKILATGANVILTTGGIDDMCLKYFVEAGAMAVRRVLKRDLKRIAKASGATILSTLANLEGEETFEAAMLGQAEEVVQERICDDELILIKNTKARTSASIILRGANDFMCDEMERSLHDALCVVKRVLESKSVVPGGGAVEAALSIYLENYATSMGSREQLAIAEFARSLLVIPNTLAVNAAQDSTDLVAKLRAFHNEAQVNPERKNLKWIGLDLSNGKPRDNKQAGVFEPTIVKVKSLKFATEAAITILRIDDLIKLHPESKDDKHGSYEDAVHSGALND</sequence>
<keyword id="KW-0002">3D-structure</keyword>
<keyword id="KW-0007">Acetylation</keyword>
<keyword id="KW-0067">ATP-binding</keyword>
<keyword id="KW-0143">Chaperone</keyword>
<keyword id="KW-0963">Cytoplasm</keyword>
<keyword id="KW-0206">Cytoskeleton</keyword>
<keyword id="KW-0903">Direct protein sequencing</keyword>
<keyword id="KW-0225">Disease variant</keyword>
<keyword id="KW-0887">Epilepsy</keyword>
<keyword id="KW-0378">Hydrolase</keyword>
<keyword id="KW-0991">Intellectual disability</keyword>
<keyword id="KW-0547">Nucleotide-binding</keyword>
<keyword id="KW-0597">Phosphoprotein</keyword>
<keyword id="KW-1267">Proteomics identification</keyword>
<keyword id="KW-1185">Reference proteome</keyword>